<feature type="signal peptide" evidence="4">
    <location>
        <begin position="1"/>
        <end position="18"/>
    </location>
</feature>
<feature type="chain" id="PRO_0000007674" description="Neurogenic locus notch homolog protein 1">
    <location>
        <begin position="19"/>
        <end position="2555"/>
    </location>
</feature>
<feature type="chain" id="PRO_0000007675" description="Notch 1 extracellular truncation" evidence="1">
    <location>
        <begin position="1721"/>
        <end position="2555"/>
    </location>
</feature>
<feature type="chain" id="PRO_0000007676" description="Notch 1 intracellular domain" evidence="1">
    <location>
        <begin position="1754"/>
        <end position="2555"/>
    </location>
</feature>
<feature type="topological domain" description="Extracellular" evidence="27 28">
    <location>
        <begin position="19"/>
        <end position="1735"/>
    </location>
</feature>
<feature type="transmembrane region" description="Helical" evidence="22 24">
    <location>
        <begin position="1736"/>
        <end position="1756"/>
    </location>
</feature>
<feature type="topological domain" description="Cytoplasmic" evidence="27 28">
    <location>
        <begin position="1757"/>
        <end position="2555"/>
    </location>
</feature>
<feature type="domain" description="EGF-like 1" evidence="5">
    <location>
        <begin position="20"/>
        <end position="58"/>
    </location>
</feature>
<feature type="domain" description="EGF-like 2" evidence="5">
    <location>
        <begin position="59"/>
        <end position="99"/>
    </location>
</feature>
<feature type="domain" description="EGF-like 3" evidence="5">
    <location>
        <begin position="102"/>
        <end position="139"/>
    </location>
</feature>
<feature type="domain" description="EGF-like 4" evidence="5">
    <location>
        <begin position="140"/>
        <end position="176"/>
    </location>
</feature>
<feature type="domain" description="EGF-like 5; calcium-binding" evidence="5">
    <location>
        <begin position="178"/>
        <end position="216"/>
    </location>
</feature>
<feature type="domain" description="EGF-like 6" evidence="5">
    <location>
        <begin position="218"/>
        <end position="255"/>
    </location>
</feature>
<feature type="domain" description="EGF-like 7; calcium-binding" evidence="5">
    <location>
        <begin position="257"/>
        <end position="293"/>
    </location>
</feature>
<feature type="domain" description="EGF-like 8; calcium-binding" evidence="5">
    <location>
        <begin position="295"/>
        <end position="333"/>
    </location>
</feature>
<feature type="domain" description="EGF-like 9; calcium-binding" evidence="5">
    <location>
        <begin position="335"/>
        <end position="371"/>
    </location>
</feature>
<feature type="domain" description="EGF-like 10" evidence="5">
    <location>
        <begin position="372"/>
        <end position="410"/>
    </location>
</feature>
<feature type="domain" description="EGF-like 11; calcium-binding" evidence="5">
    <location>
        <begin position="412"/>
        <end position="450"/>
    </location>
</feature>
<feature type="domain" description="EGF-like 12; calcium-binding" evidence="5">
    <location>
        <begin position="452"/>
        <end position="488"/>
    </location>
</feature>
<feature type="domain" description="EGF-like 13; calcium-binding" evidence="5">
    <location>
        <begin position="490"/>
        <end position="526"/>
    </location>
</feature>
<feature type="domain" description="EGF-like 14; calcium-binding" evidence="5">
    <location>
        <begin position="528"/>
        <end position="564"/>
    </location>
</feature>
<feature type="domain" description="EGF-like 15; calcium-binding" evidence="5">
    <location>
        <begin position="566"/>
        <end position="601"/>
    </location>
</feature>
<feature type="domain" description="EGF-like 16; calcium-binding" evidence="5">
    <location>
        <begin position="603"/>
        <end position="639"/>
    </location>
</feature>
<feature type="domain" description="EGF-like 17; calcium-binding" evidence="5">
    <location>
        <begin position="641"/>
        <end position="676"/>
    </location>
</feature>
<feature type="domain" description="EGF-like 18; calcium-binding" evidence="5">
    <location>
        <begin position="678"/>
        <end position="714"/>
    </location>
</feature>
<feature type="domain" description="EGF-like 19; calcium-binding" evidence="5">
    <location>
        <begin position="716"/>
        <end position="751"/>
    </location>
</feature>
<feature type="domain" description="EGF-like 20" evidence="5">
    <location>
        <begin position="753"/>
        <end position="789"/>
    </location>
</feature>
<feature type="domain" description="EGF-like 21; calcium-binding" evidence="5">
    <location>
        <begin position="791"/>
        <end position="827"/>
    </location>
</feature>
<feature type="domain" description="EGF-like 22" evidence="5">
    <location>
        <begin position="829"/>
        <end position="867"/>
    </location>
</feature>
<feature type="domain" description="EGF-like 23; calcium-binding" evidence="5">
    <location>
        <begin position="869"/>
        <end position="905"/>
    </location>
</feature>
<feature type="domain" description="EGF-like 24" evidence="5">
    <location>
        <begin position="907"/>
        <end position="943"/>
    </location>
</feature>
<feature type="domain" description="EGF-like 25; calcium-binding" evidence="5">
    <location>
        <begin position="945"/>
        <end position="981"/>
    </location>
</feature>
<feature type="domain" description="EGF-like 26" evidence="5">
    <location>
        <begin position="983"/>
        <end position="1019"/>
    </location>
</feature>
<feature type="domain" description="EGF-like 27" evidence="5">
    <location>
        <begin position="1021"/>
        <end position="1057"/>
    </location>
</feature>
<feature type="domain" description="EGF-like 28" evidence="5">
    <location>
        <begin position="1059"/>
        <end position="1095"/>
    </location>
</feature>
<feature type="domain" description="EGF-like 29" evidence="26">
    <location>
        <begin position="1097"/>
        <end position="1143"/>
    </location>
</feature>
<feature type="domain" description="EGF-like 30" evidence="5">
    <location>
        <begin position="1145"/>
        <end position="1181"/>
    </location>
</feature>
<feature type="domain" description="EGF-like 31; calcium-binding" evidence="5">
    <location>
        <begin position="1183"/>
        <end position="1219"/>
    </location>
</feature>
<feature type="domain" description="EGF-like 32; calcium-binding" evidence="5">
    <location>
        <begin position="1221"/>
        <end position="1265"/>
    </location>
</feature>
<feature type="domain" description="EGF-like 33" evidence="5">
    <location>
        <begin position="1267"/>
        <end position="1305"/>
    </location>
</feature>
<feature type="domain" description="EGF-like 34" evidence="5">
    <location>
        <begin position="1307"/>
        <end position="1346"/>
    </location>
</feature>
<feature type="domain" description="EGF-like 35" evidence="5">
    <location>
        <begin position="1348"/>
        <end position="1384"/>
    </location>
</feature>
<feature type="domain" description="EGF-like 36" evidence="5">
    <location>
        <begin position="1387"/>
        <end position="1426"/>
    </location>
</feature>
<feature type="repeat" description="LNR 1" evidence="6">
    <location>
        <begin position="1449"/>
        <end position="1489"/>
    </location>
</feature>
<feature type="repeat" description="LNR 2" evidence="6">
    <location>
        <begin position="1490"/>
        <end position="1531"/>
    </location>
</feature>
<feature type="repeat" description="LNR 3" evidence="6">
    <location>
        <begin position="1532"/>
        <end position="1571"/>
    </location>
</feature>
<feature type="repeat" description="ANK 1" evidence="4">
    <location>
        <begin position="1927"/>
        <end position="1956"/>
    </location>
</feature>
<feature type="repeat" description="ANK 2" evidence="4">
    <location>
        <begin position="1960"/>
        <end position="1990"/>
    </location>
</feature>
<feature type="repeat" description="ANK 3" evidence="4">
    <location>
        <begin position="1994"/>
        <end position="2023"/>
    </location>
</feature>
<feature type="repeat" description="ANK 4" evidence="4">
    <location>
        <begin position="2027"/>
        <end position="2056"/>
    </location>
</feature>
<feature type="repeat" description="ANK 5" evidence="4">
    <location>
        <begin position="2060"/>
        <end position="2089"/>
    </location>
</feature>
<feature type="repeat" description="ANK 6">
    <location>
        <begin position="2095"/>
        <end position="2122"/>
    </location>
</feature>
<feature type="region of interest" description="Interaction with DLL4" evidence="3">
    <location>
        <begin position="420"/>
        <end position="421"/>
    </location>
</feature>
<feature type="region of interest" description="Interaction with DLL4" evidence="3">
    <location>
        <begin position="448"/>
        <end position="452"/>
    </location>
</feature>
<feature type="region of interest" description="Interaction with PSEN1" evidence="24">
    <location>
        <begin position="1728"/>
        <end position="1760"/>
    </location>
</feature>
<feature type="region of interest" description="Disordered" evidence="7">
    <location>
        <begin position="1780"/>
        <end position="1808"/>
    </location>
</feature>
<feature type="region of interest" description="HIF1AN-binding" evidence="1">
    <location>
        <begin position="1947"/>
        <end position="1955"/>
    </location>
</feature>
<feature type="region of interest" description="HIF1AN-binding" evidence="1">
    <location>
        <begin position="2014"/>
        <end position="2022"/>
    </location>
</feature>
<feature type="region of interest" description="Disordered" evidence="7">
    <location>
        <begin position="2151"/>
        <end position="2194"/>
    </location>
</feature>
<feature type="region of interest" description="Disordered" evidence="7">
    <location>
        <begin position="2379"/>
        <end position="2447"/>
    </location>
</feature>
<feature type="region of interest" description="Disordered" evidence="7">
    <location>
        <begin position="2483"/>
        <end position="2555"/>
    </location>
</feature>
<feature type="compositionally biased region" description="Low complexity" evidence="7">
    <location>
        <begin position="2379"/>
        <end position="2408"/>
    </location>
</feature>
<feature type="compositionally biased region" description="Polar residues" evidence="7">
    <location>
        <begin position="2483"/>
        <end position="2502"/>
    </location>
</feature>
<feature type="compositionally biased region" description="Low complexity" evidence="7">
    <location>
        <begin position="2512"/>
        <end position="2527"/>
    </location>
</feature>
<feature type="compositionally biased region" description="Polar residues" evidence="7">
    <location>
        <begin position="2528"/>
        <end position="2547"/>
    </location>
</feature>
<feature type="binding site" evidence="3">
    <location>
        <position position="432"/>
    </location>
    <ligand>
        <name>Ca(2+)</name>
        <dbReference type="ChEBI" id="CHEBI:29108"/>
        <label>1</label>
    </ligand>
</feature>
<feature type="binding site" evidence="3">
    <location>
        <position position="435"/>
    </location>
    <ligand>
        <name>Ca(2+)</name>
        <dbReference type="ChEBI" id="CHEBI:29108"/>
        <label>1</label>
    </ligand>
</feature>
<feature type="binding site" evidence="3">
    <location>
        <position position="452"/>
    </location>
    <ligand>
        <name>Ca(2+)</name>
        <dbReference type="ChEBI" id="CHEBI:29108"/>
        <label>2</label>
    </ligand>
</feature>
<feature type="binding site" evidence="3">
    <location>
        <position position="453"/>
    </location>
    <ligand>
        <name>Ca(2+)</name>
        <dbReference type="ChEBI" id="CHEBI:29108"/>
        <label>2</label>
    </ligand>
</feature>
<feature type="binding site" evidence="3">
    <location>
        <position position="455"/>
    </location>
    <ligand>
        <name>Ca(2+)</name>
        <dbReference type="ChEBI" id="CHEBI:29108"/>
        <label>2</label>
    </ligand>
</feature>
<feature type="binding site" evidence="3">
    <location>
        <position position="469"/>
    </location>
    <ligand>
        <name>Ca(2+)</name>
        <dbReference type="ChEBI" id="CHEBI:29108"/>
        <label>2</label>
    </ligand>
</feature>
<feature type="binding site" evidence="3">
    <location>
        <position position="470"/>
    </location>
    <ligand>
        <name>Ca(2+)</name>
        <dbReference type="ChEBI" id="CHEBI:29108"/>
        <label>2</label>
    </ligand>
</feature>
<feature type="binding site" evidence="3">
    <location>
        <position position="490"/>
    </location>
    <ligand>
        <name>Ca(2+)</name>
        <dbReference type="ChEBI" id="CHEBI:29108"/>
        <label>3</label>
    </ligand>
</feature>
<feature type="binding site" evidence="3">
    <location>
        <position position="491"/>
    </location>
    <ligand>
        <name>Ca(2+)</name>
        <dbReference type="ChEBI" id="CHEBI:29108"/>
        <label>3</label>
    </ligand>
</feature>
<feature type="binding site" evidence="3">
    <location>
        <position position="493"/>
    </location>
    <ligand>
        <name>Ca(2+)</name>
        <dbReference type="ChEBI" id="CHEBI:29108"/>
        <label>3</label>
    </ligand>
</feature>
<feature type="binding site" evidence="3">
    <location>
        <position position="507"/>
    </location>
    <ligand>
        <name>Ca(2+)</name>
        <dbReference type="ChEBI" id="CHEBI:29108"/>
        <label>3</label>
    </ligand>
</feature>
<feature type="binding site" evidence="3">
    <location>
        <position position="508"/>
    </location>
    <ligand>
        <name>Ca(2+)</name>
        <dbReference type="ChEBI" id="CHEBI:29108"/>
        <label>3</label>
    </ligand>
</feature>
<feature type="binding site">
    <location>
        <position position="1457"/>
    </location>
    <ligand>
        <name>Ca(2+)</name>
        <dbReference type="ChEBI" id="CHEBI:29108"/>
        <label>4</label>
    </ligand>
</feature>
<feature type="binding site">
    <location>
        <position position="1460"/>
    </location>
    <ligand>
        <name>Ca(2+)</name>
        <dbReference type="ChEBI" id="CHEBI:29108"/>
        <label>4</label>
    </ligand>
</feature>
<feature type="binding site">
    <location>
        <position position="1475"/>
    </location>
    <ligand>
        <name>Ca(2+)</name>
        <dbReference type="ChEBI" id="CHEBI:29108"/>
        <label>4</label>
    </ligand>
</feature>
<feature type="binding site">
    <location>
        <position position="1478"/>
    </location>
    <ligand>
        <name>Ca(2+)</name>
        <dbReference type="ChEBI" id="CHEBI:29108"/>
        <label>4</label>
    </ligand>
</feature>
<feature type="site" description="Interaction with DLL4" evidence="3">
    <location>
        <position position="469"/>
    </location>
</feature>
<feature type="site" description="Cleavage; by furin-like protease" evidence="2">
    <location>
        <begin position="1664"/>
        <end position="1665"/>
    </location>
</feature>
<feature type="site" description="Cleavage; by ADAM17" evidence="2">
    <location>
        <begin position="1710"/>
        <end position="1711"/>
    </location>
</feature>
<feature type="modified residue" description="Phosphothreonine" evidence="2">
    <location>
        <position position="1861"/>
    </location>
</feature>
<feature type="modified residue" description="(3S)-3-hydroxyasparagine; by HIF1AN; partial" evidence="14">
    <location>
        <position position="1955"/>
    </location>
</feature>
<feature type="modified residue" description="(3S)-3-hydroxyasparagine; by HIF1AN" evidence="1">
    <location>
        <position position="2022"/>
    </location>
</feature>
<feature type="glycosylation site" description="N-linked (GlcNAc...) asparagine" evidence="4">
    <location>
        <position position="41"/>
    </location>
</feature>
<feature type="glycosylation site" description="O-linked (Glc...) serine" evidence="2">
    <location>
        <position position="65"/>
    </location>
</feature>
<feature type="glycosylation site" description="O-linked (Fuc...) threonine" evidence="2">
    <location>
        <position position="73"/>
    </location>
</feature>
<feature type="glycosylation site" description="O-linked (Fuc...) threonine" evidence="2">
    <location>
        <position position="116"/>
    </location>
</feature>
<feature type="glycosylation site" description="O-linked (Glc...) serine" evidence="2">
    <location>
        <position position="146"/>
    </location>
</feature>
<feature type="glycosylation site" description="O-linked (Fuc...) threonine" evidence="2">
    <location>
        <position position="194"/>
    </location>
</feature>
<feature type="glycosylation site" description="O-linked (Fuc...) threonine; alternate" evidence="19">
    <location>
        <position position="232"/>
    </location>
</feature>
<feature type="glycosylation site" description="O-linked (GalNAc...) threonine; alternate" evidence="19">
    <location>
        <position position="232"/>
    </location>
</feature>
<feature type="glycosylation site" description="O-linked (Fuc...) threonine" evidence="2">
    <location>
        <position position="311"/>
    </location>
</feature>
<feature type="glycosylation site" description="O-linked (Glc...) serine" evidence="2">
    <location>
        <position position="341"/>
    </location>
</feature>
<feature type="glycosylation site" description="O-linked (Fuc...) threonine" evidence="2">
    <location>
        <position position="349"/>
    </location>
</feature>
<feature type="glycosylation site" description="O-linked (Glc...) serine" evidence="2">
    <location>
        <position position="378"/>
    </location>
</feature>
<feature type="glycosylation site" description="O-linked (Glc...) serine" evidence="23">
    <location>
        <position position="435"/>
    </location>
</feature>
<feature type="glycosylation site" description="O-linked (Glc...) serine" evidence="3">
    <location>
        <position position="458"/>
    </location>
</feature>
<feature type="glycosylation site" description="O-linked (Fuc...) threonine" evidence="3">
    <location>
        <position position="466"/>
    </location>
</feature>
<feature type="glycosylation site" description="O-linked (Glc...) serine" evidence="3">
    <location>
        <position position="496"/>
    </location>
</feature>
<feature type="glycosylation site" description="O-linked (Glc...) serine" evidence="2">
    <location>
        <position position="534"/>
    </location>
</feature>
<feature type="glycosylation site" description="O-linked (Glc...) serine" evidence="2">
    <location>
        <position position="609"/>
    </location>
</feature>
<feature type="glycosylation site" description="O-linked (Fuc...) threonine" evidence="2">
    <location>
        <position position="617"/>
    </location>
</feature>
<feature type="glycosylation site" description="O-linked (Glc...) serine" evidence="2">
    <location>
        <position position="647"/>
    </location>
</feature>
<feature type="glycosylation site" description="O-linked (Fuc...) threonine" evidence="2">
    <location>
        <position position="692"/>
    </location>
</feature>
<feature type="glycosylation site" description="O-linked (Glc...) serine" evidence="2">
    <location>
        <position position="722"/>
    </location>
</feature>
<feature type="glycosylation site" description="O-linked (Glc...) serine" evidence="2">
    <location>
        <position position="759"/>
    </location>
</feature>
<feature type="glycosylation site" description="O-linked (Fuc...) threonine" evidence="2">
    <location>
        <position position="767"/>
    </location>
</feature>
<feature type="glycosylation site" description="O-linked (GlcNAc) serine" evidence="2">
    <location>
        <position position="784"/>
    </location>
</feature>
<feature type="glycosylation site" description="O-linked (Glc...) serine" evidence="2">
    <location>
        <position position="797"/>
    </location>
</feature>
<feature type="glycosylation site" description="O-linked (Fuc...) threonine" evidence="2">
    <location>
        <position position="805"/>
    </location>
</feature>
<feature type="glycosylation site" description="O-linked (Fuc) serine" evidence="2">
    <location>
        <position position="921"/>
    </location>
</feature>
<feature type="glycosylation site" description="O-linked (Glc...) serine" evidence="2">
    <location>
        <position position="951"/>
    </location>
</feature>
<feature type="glycosylation site" description="N-linked (GlcNAc...) asparagine" evidence="4">
    <location>
        <position position="959"/>
    </location>
</feature>
<feature type="glycosylation site" description="O-linked (Fuc...) threonine" evidence="2">
    <location>
        <position position="997"/>
    </location>
</feature>
<feature type="glycosylation site" description="O-linked (Glc...) serine" evidence="2">
    <location>
        <position position="1027"/>
    </location>
</feature>
<feature type="glycosylation site" description="O-linked (Fuc...) threonine" evidence="2">
    <location>
        <position position="1035"/>
    </location>
</feature>
<feature type="glycosylation site" description="O-linked (Glc...) serine" evidence="2">
    <location>
        <position position="1065"/>
    </location>
</feature>
<feature type="glycosylation site" description="O-linked (Fuc...) threonine" evidence="2">
    <location>
        <position position="1159"/>
    </location>
</feature>
<feature type="glycosylation site" description="N-linked (GlcNAc...) asparagine" evidence="4">
    <location>
        <position position="1179"/>
    </location>
</feature>
<feature type="glycosylation site" description="O-linked (Glc...) serine" evidence="2">
    <location>
        <position position="1189"/>
    </location>
</feature>
<feature type="glycosylation site" description="O-linked (Fuc...) threonine" evidence="2">
    <location>
        <position position="1197"/>
    </location>
</feature>
<feature type="glycosylation site" description="N-linked (GlcNAc...) asparagine" evidence="4">
    <location>
        <position position="1241"/>
    </location>
</feature>
<feature type="glycosylation site" description="O-linked (Glc...) serine" evidence="2">
    <location>
        <position position="1273"/>
    </location>
</feature>
<feature type="glycosylation site" description="O-linked (Fuc...) threonine" evidence="2">
    <location>
        <position position="1362"/>
    </location>
</feature>
<feature type="glycosylation site" description="O-linked (GlcNAc...) threonine" evidence="2">
    <location>
        <position position="1379"/>
    </location>
</feature>
<feature type="glycosylation site" description="O-linked (Fuc...) threonine; alternate" evidence="19">
    <location>
        <position position="1402"/>
    </location>
</feature>
<feature type="glycosylation site" description="O-linked (GalNAc...) threonine; alternate" evidence="19">
    <location>
        <position position="1402"/>
    </location>
</feature>
<feature type="glycosylation site" description="N-linked (GlcNAc...) asparagine" evidence="4">
    <location>
        <position position="1489"/>
    </location>
</feature>
<feature type="glycosylation site" description="N-linked (GlcNAc...) asparagine" evidence="4">
    <location>
        <position position="1587"/>
    </location>
</feature>
<feature type="glycosylation site" description="O-linked (GalNAc...) threonine" evidence="19">
    <location>
        <position position="1725"/>
    </location>
</feature>
<feature type="disulfide bond" evidence="5">
    <location>
        <begin position="24"/>
        <end position="37"/>
    </location>
</feature>
<feature type="disulfide bond" evidence="5">
    <location>
        <begin position="31"/>
        <end position="46"/>
    </location>
</feature>
<feature type="disulfide bond" evidence="5">
    <location>
        <begin position="48"/>
        <end position="57"/>
    </location>
</feature>
<feature type="disulfide bond" evidence="5">
    <location>
        <begin position="63"/>
        <end position="74"/>
    </location>
</feature>
<feature type="disulfide bond" evidence="5">
    <location>
        <begin position="68"/>
        <end position="87"/>
    </location>
</feature>
<feature type="disulfide bond" evidence="5">
    <location>
        <begin position="89"/>
        <end position="98"/>
    </location>
</feature>
<feature type="disulfide bond" evidence="5">
    <location>
        <begin position="106"/>
        <end position="117"/>
    </location>
</feature>
<feature type="disulfide bond" evidence="5">
    <location>
        <begin position="111"/>
        <end position="127"/>
    </location>
</feature>
<feature type="disulfide bond" evidence="5">
    <location>
        <begin position="129"/>
        <end position="138"/>
    </location>
</feature>
<feature type="disulfide bond" evidence="5">
    <location>
        <begin position="144"/>
        <end position="155"/>
    </location>
</feature>
<feature type="disulfide bond" evidence="5">
    <location>
        <begin position="149"/>
        <end position="164"/>
    </location>
</feature>
<feature type="disulfide bond" evidence="5">
    <location>
        <begin position="166"/>
        <end position="175"/>
    </location>
</feature>
<feature type="disulfide bond" evidence="5">
    <location>
        <begin position="182"/>
        <end position="195"/>
    </location>
</feature>
<feature type="disulfide bond" evidence="5">
    <location>
        <begin position="189"/>
        <end position="204"/>
    </location>
</feature>
<feature type="disulfide bond" evidence="5">
    <location>
        <begin position="206"/>
        <end position="215"/>
    </location>
</feature>
<feature type="disulfide bond" evidence="5">
    <location>
        <begin position="222"/>
        <end position="233"/>
    </location>
</feature>
<feature type="disulfide bond" evidence="5">
    <location>
        <begin position="227"/>
        <end position="243"/>
    </location>
</feature>
<feature type="disulfide bond" evidence="5">
    <location>
        <begin position="245"/>
        <end position="254"/>
    </location>
</feature>
<feature type="disulfide bond" evidence="5">
    <location>
        <begin position="261"/>
        <end position="272"/>
    </location>
</feature>
<feature type="disulfide bond" evidence="5">
    <location>
        <begin position="266"/>
        <end position="281"/>
    </location>
</feature>
<feature type="disulfide bond" evidence="5">
    <location>
        <begin position="283"/>
        <end position="292"/>
    </location>
</feature>
<feature type="disulfide bond" evidence="5">
    <location>
        <begin position="299"/>
        <end position="312"/>
    </location>
</feature>
<feature type="disulfide bond" evidence="5">
    <location>
        <begin position="306"/>
        <end position="321"/>
    </location>
</feature>
<feature type="disulfide bond" evidence="5">
    <location>
        <begin position="323"/>
        <end position="332"/>
    </location>
</feature>
<feature type="disulfide bond" evidence="5">
    <location>
        <begin position="339"/>
        <end position="350"/>
    </location>
</feature>
<feature type="disulfide bond" evidence="5">
    <location>
        <begin position="344"/>
        <end position="359"/>
    </location>
</feature>
<feature type="disulfide bond" evidence="5">
    <location>
        <begin position="361"/>
        <end position="370"/>
    </location>
</feature>
<feature type="disulfide bond" evidence="5">
    <location>
        <begin position="376"/>
        <end position="387"/>
    </location>
</feature>
<feature type="disulfide bond" evidence="5">
    <location>
        <begin position="381"/>
        <end position="398"/>
    </location>
</feature>
<feature type="disulfide bond" evidence="5">
    <location>
        <begin position="400"/>
        <end position="409"/>
    </location>
</feature>
<feature type="disulfide bond" evidence="3">
    <location>
        <begin position="416"/>
        <end position="429"/>
    </location>
</feature>
<feature type="disulfide bond" evidence="3">
    <location>
        <begin position="423"/>
        <end position="438"/>
    </location>
</feature>
<feature type="disulfide bond" evidence="3">
    <location>
        <begin position="440"/>
        <end position="449"/>
    </location>
</feature>
<feature type="disulfide bond" evidence="3">
    <location>
        <begin position="456"/>
        <end position="467"/>
    </location>
</feature>
<feature type="disulfide bond" evidence="3">
    <location>
        <begin position="461"/>
        <end position="476"/>
    </location>
</feature>
<feature type="disulfide bond" evidence="3">
    <location>
        <begin position="478"/>
        <end position="487"/>
    </location>
</feature>
<feature type="disulfide bond" evidence="3">
    <location>
        <begin position="494"/>
        <end position="505"/>
    </location>
</feature>
<feature type="disulfide bond" evidence="3">
    <location>
        <begin position="499"/>
        <end position="514"/>
    </location>
</feature>
<feature type="disulfide bond" evidence="3">
    <location>
        <begin position="516"/>
        <end position="525"/>
    </location>
</feature>
<feature type="disulfide bond" evidence="5">
    <location>
        <begin position="532"/>
        <end position="543"/>
    </location>
</feature>
<feature type="disulfide bond" evidence="5">
    <location>
        <begin position="537"/>
        <end position="552"/>
    </location>
</feature>
<feature type="disulfide bond" evidence="5">
    <location>
        <begin position="554"/>
        <end position="563"/>
    </location>
</feature>
<feature type="disulfide bond" evidence="5">
    <location>
        <begin position="570"/>
        <end position="580"/>
    </location>
</feature>
<feature type="disulfide bond" evidence="5">
    <location>
        <begin position="575"/>
        <end position="589"/>
    </location>
</feature>
<feature type="disulfide bond" evidence="5">
    <location>
        <begin position="591"/>
        <end position="600"/>
    </location>
</feature>
<feature type="disulfide bond" evidence="5">
    <location>
        <begin position="607"/>
        <end position="618"/>
    </location>
</feature>
<feature type="disulfide bond" evidence="5">
    <location>
        <begin position="612"/>
        <end position="627"/>
    </location>
</feature>
<feature type="disulfide bond" evidence="5">
    <location>
        <begin position="629"/>
        <end position="638"/>
    </location>
</feature>
<feature type="disulfide bond" evidence="5">
    <location>
        <begin position="645"/>
        <end position="655"/>
    </location>
</feature>
<feature type="disulfide bond" evidence="5">
    <location>
        <begin position="650"/>
        <end position="664"/>
    </location>
</feature>
<feature type="disulfide bond" evidence="5">
    <location>
        <begin position="666"/>
        <end position="675"/>
    </location>
</feature>
<feature type="disulfide bond" evidence="5">
    <location>
        <begin position="682"/>
        <end position="693"/>
    </location>
</feature>
<feature type="disulfide bond" evidence="5">
    <location>
        <begin position="687"/>
        <end position="702"/>
    </location>
</feature>
<feature type="disulfide bond" evidence="5">
    <location>
        <begin position="704"/>
        <end position="713"/>
    </location>
</feature>
<feature type="disulfide bond" evidence="5">
    <location>
        <begin position="720"/>
        <end position="730"/>
    </location>
</feature>
<feature type="disulfide bond" evidence="5">
    <location>
        <begin position="725"/>
        <end position="739"/>
    </location>
</feature>
<feature type="disulfide bond" evidence="5">
    <location>
        <begin position="741"/>
        <end position="750"/>
    </location>
</feature>
<feature type="disulfide bond" evidence="5">
    <location>
        <begin position="757"/>
        <end position="768"/>
    </location>
</feature>
<feature type="disulfide bond" evidence="5">
    <location>
        <begin position="762"/>
        <end position="777"/>
    </location>
</feature>
<feature type="disulfide bond" evidence="5">
    <location>
        <begin position="779"/>
        <end position="788"/>
    </location>
</feature>
<feature type="disulfide bond" evidence="5">
    <location>
        <begin position="795"/>
        <end position="806"/>
    </location>
</feature>
<feature type="disulfide bond" evidence="5">
    <location>
        <begin position="800"/>
        <end position="815"/>
    </location>
</feature>
<feature type="disulfide bond" evidence="5">
    <location>
        <begin position="817"/>
        <end position="826"/>
    </location>
</feature>
<feature type="disulfide bond" evidence="5">
    <location>
        <begin position="833"/>
        <end position="844"/>
    </location>
</feature>
<feature type="disulfide bond" evidence="5">
    <location>
        <begin position="838"/>
        <end position="855"/>
    </location>
</feature>
<feature type="disulfide bond" evidence="5">
    <location>
        <begin position="857"/>
        <end position="866"/>
    </location>
</feature>
<feature type="disulfide bond" evidence="5">
    <location>
        <begin position="873"/>
        <end position="884"/>
    </location>
</feature>
<feature type="disulfide bond" evidence="5">
    <location>
        <begin position="878"/>
        <end position="893"/>
    </location>
</feature>
<feature type="disulfide bond" evidence="5">
    <location>
        <begin position="895"/>
        <end position="904"/>
    </location>
</feature>
<feature type="disulfide bond" evidence="5">
    <location>
        <begin position="911"/>
        <end position="922"/>
    </location>
</feature>
<feature type="disulfide bond" evidence="5">
    <location>
        <begin position="916"/>
        <end position="931"/>
    </location>
</feature>
<feature type="disulfide bond" evidence="5">
    <location>
        <begin position="933"/>
        <end position="942"/>
    </location>
</feature>
<feature type="disulfide bond" evidence="5">
    <location>
        <begin position="949"/>
        <end position="960"/>
    </location>
</feature>
<feature type="disulfide bond" evidence="5">
    <location>
        <begin position="954"/>
        <end position="969"/>
    </location>
</feature>
<feature type="disulfide bond" evidence="5">
    <location>
        <begin position="971"/>
        <end position="980"/>
    </location>
</feature>
<feature type="disulfide bond" evidence="5">
    <location>
        <begin position="987"/>
        <end position="998"/>
    </location>
</feature>
<feature type="disulfide bond" evidence="5">
    <location>
        <begin position="992"/>
        <end position="1007"/>
    </location>
</feature>
<feature type="disulfide bond" evidence="5">
    <location>
        <begin position="1009"/>
        <end position="1018"/>
    </location>
</feature>
<feature type="disulfide bond" evidence="5">
    <location>
        <begin position="1025"/>
        <end position="1036"/>
    </location>
</feature>
<feature type="disulfide bond" evidence="5">
    <location>
        <begin position="1030"/>
        <end position="1045"/>
    </location>
</feature>
<feature type="disulfide bond" evidence="5">
    <location>
        <begin position="1047"/>
        <end position="1056"/>
    </location>
</feature>
<feature type="disulfide bond" evidence="5">
    <location>
        <begin position="1063"/>
        <end position="1074"/>
    </location>
</feature>
<feature type="disulfide bond" evidence="5">
    <location>
        <begin position="1068"/>
        <end position="1083"/>
    </location>
</feature>
<feature type="disulfide bond" evidence="5">
    <location>
        <begin position="1085"/>
        <end position="1094"/>
    </location>
</feature>
<feature type="disulfide bond" evidence="26">
    <location>
        <begin position="1101"/>
        <end position="1122"/>
    </location>
</feature>
<feature type="disulfide bond" evidence="5">
    <location>
        <begin position="1116"/>
        <end position="1131"/>
    </location>
</feature>
<feature type="disulfide bond" evidence="5">
    <location>
        <begin position="1133"/>
        <end position="1142"/>
    </location>
</feature>
<feature type="disulfide bond" evidence="5">
    <location>
        <begin position="1149"/>
        <end position="1160"/>
    </location>
</feature>
<feature type="disulfide bond" evidence="5">
    <location>
        <begin position="1154"/>
        <end position="1169"/>
    </location>
</feature>
<feature type="disulfide bond" evidence="5">
    <location>
        <begin position="1171"/>
        <end position="1180"/>
    </location>
</feature>
<feature type="disulfide bond" evidence="5">
    <location>
        <begin position="1187"/>
        <end position="1198"/>
    </location>
</feature>
<feature type="disulfide bond" evidence="5">
    <location>
        <begin position="1192"/>
        <end position="1207"/>
    </location>
</feature>
<feature type="disulfide bond" evidence="5">
    <location>
        <begin position="1209"/>
        <end position="1218"/>
    </location>
</feature>
<feature type="disulfide bond" evidence="5">
    <location>
        <begin position="1238"/>
        <end position="1253"/>
    </location>
</feature>
<feature type="disulfide bond" evidence="5">
    <location>
        <begin position="1255"/>
        <end position="1264"/>
    </location>
</feature>
<feature type="disulfide bond" evidence="5">
    <location>
        <begin position="1271"/>
        <end position="1284"/>
    </location>
</feature>
<feature type="disulfide bond" evidence="5">
    <location>
        <begin position="1276"/>
        <end position="1293"/>
    </location>
</feature>
<feature type="disulfide bond" evidence="5">
    <location>
        <begin position="1295"/>
        <end position="1304"/>
    </location>
</feature>
<feature type="disulfide bond" evidence="5">
    <location>
        <begin position="1311"/>
        <end position="1322"/>
    </location>
</feature>
<feature type="disulfide bond" evidence="5">
    <location>
        <begin position="1316"/>
        <end position="1334"/>
    </location>
</feature>
<feature type="disulfide bond" evidence="5">
    <location>
        <begin position="1336"/>
        <end position="1345"/>
    </location>
</feature>
<feature type="disulfide bond" evidence="5">
    <location>
        <begin position="1352"/>
        <end position="1363"/>
    </location>
</feature>
<feature type="disulfide bond" evidence="5">
    <location>
        <begin position="1357"/>
        <end position="1372"/>
    </location>
</feature>
<feature type="disulfide bond" evidence="5">
    <location>
        <begin position="1374"/>
        <end position="1383"/>
    </location>
</feature>
<feature type="disulfide bond" evidence="5">
    <location>
        <begin position="1391"/>
        <end position="1403"/>
    </location>
</feature>
<feature type="disulfide bond" evidence="5">
    <location>
        <begin position="1397"/>
        <end position="1414"/>
    </location>
</feature>
<feature type="disulfide bond" evidence="5">
    <location>
        <begin position="1416"/>
        <end position="1425"/>
    </location>
</feature>
<feature type="disulfide bond" evidence="12">
    <location>
        <begin position="1449"/>
        <end position="1472"/>
    </location>
</feature>
<feature type="disulfide bond" evidence="12">
    <location>
        <begin position="1454"/>
        <end position="1467"/>
    </location>
</feature>
<feature type="disulfide bond" evidence="12">
    <location>
        <begin position="1463"/>
        <end position="1479"/>
    </location>
</feature>
<feature type="disulfide bond" evidence="6">
    <location>
        <begin position="1490"/>
        <end position="1514"/>
    </location>
</feature>
<feature type="disulfide bond" evidence="6">
    <location>
        <begin position="1496"/>
        <end position="1509"/>
    </location>
</feature>
<feature type="disulfide bond" evidence="6">
    <location>
        <begin position="1505"/>
        <end position="1521"/>
    </location>
</feature>
<feature type="disulfide bond" evidence="6">
    <location>
        <begin position="1536"/>
        <end position="1549"/>
    </location>
</feature>
<feature type="disulfide bond" evidence="6">
    <location>
        <begin position="1545"/>
        <end position="1561"/>
    </location>
</feature>
<feature type="cross-link" description="Glycyl lysine isopeptide (Lys-Gly) (interchain with G-Cter in ubiquitin)" evidence="2">
    <location>
        <position position="1759"/>
    </location>
</feature>
<feature type="sequence variant" id="VAR_034898" description="In dbSNP:rs11574885.">
    <original>Q</original>
    <variation>R</variation>
    <location>
        <position position="300"/>
    </location>
</feature>
<feature type="sequence variant" id="VAR_071960" description="In AOS5; dbSNP:rs587777736." evidence="20">
    <original>C</original>
    <variation>R</variation>
    <location>
        <position position="429"/>
    </location>
</feature>
<feature type="sequence variant" id="VAR_048990" description="In dbSNP:rs587778563.">
    <original>R</original>
    <variation>W</variation>
    <location>
        <position position="879"/>
    </location>
</feature>
<feature type="sequence variant" id="VAR_071961" description="In AOS5; dbSNP:rs587781259." evidence="20">
    <original>C</original>
    <variation>Y</variation>
    <location>
        <position position="1496"/>
    </location>
</feature>
<feature type="sequence variant" id="VAR_046618" description="In dbSNP:rs2229968.">
    <original>V</original>
    <variation>I</variation>
    <location>
        <position position="1671"/>
    </location>
</feature>
<feature type="sequence variant" id="VAR_071962" description="In AOS5; dbSNP:rs587777734." evidence="20">
    <original>D</original>
    <variation>N</variation>
    <location>
        <position position="1989"/>
    </location>
</feature>
<feature type="mutagenesis site" description="Formation of an artifactual disulfide bond with PSEN1." evidence="24">
    <original>P</original>
    <variation>C</variation>
    <location>
        <position position="1728"/>
    </location>
</feature>
<feature type="mutagenesis site" description="Loss of proteolytic cleavage by gamma-secretase." evidence="24">
    <location>
        <begin position="1755"/>
        <end position="1761"/>
    </location>
</feature>
<feature type="sequence conflict" description="In Ref. 1; AAG33848 and 3; AAA60614." evidence="26" ref="1 3">
    <original>G</original>
    <variation>R</variation>
    <location>
        <position position="187"/>
    </location>
</feature>
<feature type="sequence conflict" description="In Ref. 1; AAG33848 and 3; AAA60614." evidence="26" ref="1 3">
    <original>R</original>
    <variation>P</variation>
    <location>
        <position position="282"/>
    </location>
</feature>
<feature type="sequence conflict" description="In Ref. 1; AAG33848 and 3; AAA60614." evidence="26" ref="1 3">
    <original>I</original>
    <variation>M</variation>
    <location>
        <position position="477"/>
    </location>
</feature>
<feature type="sequence conflict" description="In Ref. 1; AAG33848 and 3; AAA60614." evidence="26" ref="1 3">
    <original>HG</original>
    <variation>LR</variation>
    <location>
        <begin position="614"/>
        <end position="615"/>
    </location>
</feature>
<feature type="sequence conflict" description="In Ref. 1; AAG33848 and 3; AAA60614." evidence="26" ref="1 3">
    <original>R</original>
    <variation>P</variation>
    <location>
        <position position="621"/>
    </location>
</feature>
<feature type="sequence conflict" description="In Ref. 1; AAG33848 and 3; AAA60614." evidence="26" ref="1 3">
    <original>I</original>
    <variation>S</variation>
    <location>
        <position position="677"/>
    </location>
</feature>
<feature type="sequence conflict" description="In Ref. 1; AAG33848 and 3; AAA60614." evidence="26" ref="1 3">
    <original>Y</original>
    <variation>I</variation>
    <location>
        <position position="775"/>
    </location>
</feature>
<feature type="sequence conflict" description="In Ref. 1; AAG33848 and 3; AAA60614." evidence="26" ref="1 3">
    <original>Q</original>
    <variation>K</variation>
    <location>
        <position position="803"/>
    </location>
</feature>
<feature type="sequence conflict" description="In Ref. 1; AAG33848 and 3; AAA60614." evidence="26" ref="1 3">
    <original>GWQ</original>
    <variation>AGAK</variation>
    <location>
        <begin position="860"/>
        <end position="862"/>
    </location>
</feature>
<feature type="sequence conflict" description="In Ref. 1; AAG33848 and 3; AAA60614." evidence="26" ref="1 3">
    <original>D</original>
    <variation>V</variation>
    <location>
        <position position="1021"/>
    </location>
</feature>
<feature type="sequence conflict" description="In Ref. 1; AAG33848 and 3; AAA60614." evidence="26" ref="1 3">
    <original>Q</original>
    <variation>R</variation>
    <location>
        <position position="1028"/>
    </location>
</feature>
<feature type="sequence conflict" description="In Ref. 1; AAG33848 and 3; AAA60614." evidence="26" ref="1 3">
    <original>H</original>
    <variation>L</variation>
    <location>
        <position position="1032"/>
    </location>
</feature>
<feature type="sequence conflict" description="In Ref. 1; AAG33848 and 3; AAA60614." evidence="26" ref="1 3">
    <original>CGSY</original>
    <variation>RGLH</variation>
    <location>
        <begin position="1040"/>
        <end position="1043"/>
    </location>
</feature>
<feature type="helix" evidence="36">
    <location>
        <begin position="143"/>
        <end position="146"/>
    </location>
</feature>
<feature type="strand" evidence="36">
    <location>
        <begin position="154"/>
        <end position="157"/>
    </location>
</feature>
<feature type="strand" evidence="36">
    <location>
        <begin position="162"/>
        <end position="165"/>
    </location>
</feature>
<feature type="strand" evidence="36">
    <location>
        <begin position="170"/>
        <end position="175"/>
    </location>
</feature>
<feature type="helix" evidence="36">
    <location>
        <begin position="181"/>
        <end position="184"/>
    </location>
</feature>
<feature type="turn" evidence="36">
    <location>
        <begin position="190"/>
        <end position="192"/>
    </location>
</feature>
<feature type="strand" evidence="36">
    <location>
        <begin position="194"/>
        <end position="198"/>
    </location>
</feature>
<feature type="strand" evidence="36">
    <location>
        <begin position="201"/>
        <end position="205"/>
    </location>
</feature>
<feature type="strand" evidence="36">
    <location>
        <begin position="210"/>
        <end position="212"/>
    </location>
</feature>
<feature type="strand" evidence="36">
    <location>
        <begin position="232"/>
        <end position="235"/>
    </location>
</feature>
<feature type="strand" evidence="36">
    <location>
        <begin position="237"/>
        <end position="239"/>
    </location>
</feature>
<feature type="strand" evidence="36">
    <location>
        <begin position="241"/>
        <end position="244"/>
    </location>
</feature>
<feature type="strand" evidence="36">
    <location>
        <begin position="249"/>
        <end position="254"/>
    </location>
</feature>
<feature type="strand" evidence="36">
    <location>
        <begin position="271"/>
        <end position="274"/>
    </location>
</feature>
<feature type="strand" evidence="36">
    <location>
        <begin position="279"/>
        <end position="282"/>
    </location>
</feature>
<feature type="strand" evidence="36">
    <location>
        <begin position="289"/>
        <end position="292"/>
    </location>
</feature>
<feature type="helix" evidence="35">
    <location>
        <begin position="415"/>
        <end position="417"/>
    </location>
</feature>
<feature type="strand" evidence="35">
    <location>
        <begin position="418"/>
        <end position="420"/>
    </location>
</feature>
<feature type="strand" evidence="35">
    <location>
        <begin position="422"/>
        <end position="424"/>
    </location>
</feature>
<feature type="strand" evidence="35">
    <location>
        <begin position="428"/>
        <end position="432"/>
    </location>
</feature>
<feature type="strand" evidence="35">
    <location>
        <begin position="435"/>
        <end position="439"/>
    </location>
</feature>
<feature type="strand" evidence="35">
    <location>
        <begin position="444"/>
        <end position="446"/>
    </location>
</feature>
<feature type="helix" evidence="38">
    <location>
        <begin position="455"/>
        <end position="458"/>
    </location>
</feature>
<feature type="strand" evidence="38">
    <location>
        <begin position="466"/>
        <end position="470"/>
    </location>
</feature>
<feature type="strand" evidence="38">
    <location>
        <begin position="473"/>
        <end position="477"/>
    </location>
</feature>
<feature type="strand" evidence="38">
    <location>
        <begin position="482"/>
        <end position="484"/>
    </location>
</feature>
<feature type="turn" evidence="35">
    <location>
        <begin position="493"/>
        <end position="496"/>
    </location>
</feature>
<feature type="turn" evidence="32">
    <location>
        <begin position="500"/>
        <end position="502"/>
    </location>
</feature>
<feature type="strand" evidence="35">
    <location>
        <begin position="504"/>
        <end position="507"/>
    </location>
</feature>
<feature type="strand" evidence="35">
    <location>
        <begin position="512"/>
        <end position="515"/>
    </location>
</feature>
<feature type="strand" evidence="35">
    <location>
        <begin position="520"/>
        <end position="522"/>
    </location>
</feature>
<feature type="helix" evidence="40">
    <location>
        <begin position="756"/>
        <end position="759"/>
    </location>
</feature>
<feature type="strand" evidence="40">
    <location>
        <begin position="767"/>
        <end position="771"/>
    </location>
</feature>
<feature type="strand" evidence="40">
    <location>
        <begin position="774"/>
        <end position="778"/>
    </location>
</feature>
<feature type="strand" evidence="40">
    <location>
        <begin position="783"/>
        <end position="785"/>
    </location>
</feature>
<feature type="helix" evidence="40">
    <location>
        <begin position="794"/>
        <end position="797"/>
    </location>
</feature>
<feature type="strand" evidence="40">
    <location>
        <begin position="805"/>
        <end position="809"/>
    </location>
</feature>
<feature type="strand" evidence="40">
    <location>
        <begin position="812"/>
        <end position="816"/>
    </location>
</feature>
<feature type="strand" evidence="40">
    <location>
        <begin position="821"/>
        <end position="823"/>
    </location>
</feature>
<feature type="turn" evidence="40">
    <location>
        <begin position="832"/>
        <end position="835"/>
    </location>
</feature>
<feature type="strand" evidence="40">
    <location>
        <begin position="843"/>
        <end position="846"/>
    </location>
</feature>
<feature type="strand" evidence="40">
    <location>
        <begin position="853"/>
        <end position="856"/>
    </location>
</feature>
<feature type="strand" evidence="40">
    <location>
        <begin position="861"/>
        <end position="863"/>
    </location>
</feature>
<feature type="helix" evidence="40">
    <location>
        <begin position="872"/>
        <end position="875"/>
    </location>
</feature>
<feature type="strand" evidence="40">
    <location>
        <begin position="883"/>
        <end position="887"/>
    </location>
</feature>
<feature type="strand" evidence="40">
    <location>
        <begin position="890"/>
        <end position="894"/>
    </location>
</feature>
<feature type="strand" evidence="40">
    <location>
        <begin position="899"/>
        <end position="901"/>
    </location>
</feature>
<feature type="strand" evidence="40">
    <location>
        <begin position="921"/>
        <end position="925"/>
    </location>
</feature>
<feature type="strand" evidence="40">
    <location>
        <begin position="928"/>
        <end position="932"/>
    </location>
</feature>
<feature type="strand" evidence="40">
    <location>
        <begin position="937"/>
        <end position="939"/>
    </location>
</feature>
<feature type="helix" evidence="34">
    <location>
        <begin position="1448"/>
        <end position="1450"/>
    </location>
</feature>
<feature type="helix" evidence="33">
    <location>
        <begin position="1452"/>
        <end position="1457"/>
    </location>
</feature>
<feature type="strand" evidence="33">
    <location>
        <begin position="1460"/>
        <end position="1462"/>
    </location>
</feature>
<feature type="helix" evidence="33">
    <location>
        <begin position="1465"/>
        <end position="1467"/>
    </location>
</feature>
<feature type="helix" evidence="33">
    <location>
        <begin position="1470"/>
        <end position="1472"/>
    </location>
</feature>
<feature type="helix" evidence="33">
    <location>
        <begin position="1473"/>
        <end position="1476"/>
    </location>
</feature>
<feature type="turn" evidence="33">
    <location>
        <begin position="1477"/>
        <end position="1482"/>
    </location>
</feature>
<feature type="turn" evidence="33">
    <location>
        <begin position="1486"/>
        <end position="1489"/>
    </location>
</feature>
<feature type="helix" evidence="33">
    <location>
        <begin position="1492"/>
        <end position="1494"/>
    </location>
</feature>
<feature type="helix" evidence="33">
    <location>
        <begin position="1496"/>
        <end position="1498"/>
    </location>
</feature>
<feature type="turn" evidence="33">
    <location>
        <begin position="1499"/>
        <end position="1501"/>
    </location>
</feature>
<feature type="strand" evidence="33">
    <location>
        <begin position="1502"/>
        <end position="1504"/>
    </location>
</feature>
<feature type="helix" evidence="33">
    <location>
        <begin position="1507"/>
        <end position="1509"/>
    </location>
</feature>
<feature type="helix" evidence="33">
    <location>
        <begin position="1512"/>
        <end position="1519"/>
    </location>
</feature>
<feature type="turn" evidence="33">
    <location>
        <begin position="1530"/>
        <end position="1532"/>
    </location>
</feature>
<feature type="helix" evidence="33">
    <location>
        <begin position="1533"/>
        <end position="1539"/>
    </location>
</feature>
<feature type="strand" evidence="33">
    <location>
        <begin position="1542"/>
        <end position="1544"/>
    </location>
</feature>
<feature type="helix" evidence="33">
    <location>
        <begin position="1547"/>
        <end position="1549"/>
    </location>
</feature>
<feature type="helix" evidence="33">
    <location>
        <begin position="1552"/>
        <end position="1559"/>
    </location>
</feature>
<feature type="strand" evidence="34">
    <location>
        <begin position="1563"/>
        <end position="1565"/>
    </location>
</feature>
<feature type="strand" evidence="33">
    <location>
        <begin position="1571"/>
        <end position="1580"/>
    </location>
</feature>
<feature type="helix" evidence="33">
    <location>
        <begin position="1582"/>
        <end position="1587"/>
    </location>
</feature>
<feature type="helix" evidence="33">
    <location>
        <begin position="1589"/>
        <end position="1600"/>
    </location>
</feature>
<feature type="strand" evidence="33">
    <location>
        <begin position="1602"/>
        <end position="1606"/>
    </location>
</feature>
<feature type="strand" evidence="33">
    <location>
        <begin position="1616"/>
        <end position="1620"/>
    </location>
</feature>
<feature type="strand" evidence="33">
    <location>
        <begin position="1672"/>
        <end position="1681"/>
    </location>
</feature>
<feature type="helix" evidence="33">
    <location>
        <begin position="1685"/>
        <end position="1688"/>
    </location>
</feature>
<feature type="helix" evidence="33">
    <location>
        <begin position="1696"/>
        <end position="1708"/>
    </location>
</feature>
<feature type="strand" evidence="33">
    <location>
        <begin position="1714"/>
        <end position="1716"/>
    </location>
</feature>
<feature type="strand" evidence="33">
    <location>
        <begin position="1718"/>
        <end position="1724"/>
    </location>
</feature>
<feature type="strand" evidence="39">
    <location>
        <begin position="1733"/>
        <end position="1735"/>
    </location>
</feature>
<feature type="helix" evidence="39">
    <location>
        <begin position="1736"/>
        <end position="1741"/>
    </location>
</feature>
<feature type="helix" evidence="39">
    <location>
        <begin position="1743"/>
        <end position="1746"/>
    </location>
</feature>
<feature type="turn" evidence="39">
    <location>
        <begin position="1747"/>
        <end position="1752"/>
    </location>
</feature>
<feature type="strand" evidence="39">
    <location>
        <begin position="1755"/>
        <end position="1760"/>
    </location>
</feature>
<feature type="strand" evidence="37">
    <location>
        <begin position="1767"/>
        <end position="1769"/>
    </location>
</feature>
<feature type="helix" evidence="30">
    <location>
        <begin position="1884"/>
        <end position="1890"/>
    </location>
</feature>
<feature type="helix" evidence="30">
    <location>
        <begin position="1909"/>
        <end position="1914"/>
    </location>
</feature>
<feature type="turn" evidence="31">
    <location>
        <begin position="1925"/>
        <end position="1927"/>
    </location>
</feature>
<feature type="helix" evidence="31">
    <location>
        <begin position="1931"/>
        <end position="1937"/>
    </location>
</feature>
<feature type="helix" evidence="31">
    <location>
        <begin position="1941"/>
        <end position="1949"/>
    </location>
</feature>
<feature type="helix" evidence="31">
    <location>
        <begin position="1964"/>
        <end position="1970"/>
    </location>
</feature>
<feature type="helix" evidence="31">
    <location>
        <begin position="1974"/>
        <end position="1982"/>
    </location>
</feature>
<feature type="strand" evidence="30">
    <location>
        <begin position="1983"/>
        <end position="1985"/>
    </location>
</feature>
<feature type="helix" evidence="31">
    <location>
        <begin position="1998"/>
        <end position="2005"/>
    </location>
</feature>
<feature type="helix" evidence="31">
    <location>
        <begin position="2008"/>
        <end position="2016"/>
    </location>
</feature>
<feature type="helix" evidence="31">
    <location>
        <begin position="2031"/>
        <end position="2037"/>
    </location>
</feature>
<feature type="helix" evidence="31">
    <location>
        <begin position="2041"/>
        <end position="2049"/>
    </location>
</feature>
<feature type="helix" evidence="31">
    <location>
        <begin position="2064"/>
        <end position="2071"/>
    </location>
</feature>
<feature type="helix" evidence="31">
    <location>
        <begin position="2074"/>
        <end position="2082"/>
    </location>
</feature>
<feature type="helix" evidence="31">
    <location>
        <begin position="2097"/>
        <end position="2103"/>
    </location>
</feature>
<feature type="helix" evidence="31">
    <location>
        <begin position="2107"/>
        <end position="2115"/>
    </location>
</feature>
<comment type="function">
    <text evidence="16">Functions as a receptor for membrane-bound ligands Jagged-1 (JAG1), Jagged-2 (JAG2) and Delta-1 (DLL1) to regulate cell-fate determination. Upon ligand activation through the released notch intracellular domain (NICD) it forms a transcriptional activator complex with RBPJ/RBPSUH and activates genes of the enhancer of split locus. Affects the implementation of differentiation, proliferation and apoptotic programs. Involved in angiogenesis; negatively regulates endothelial cell proliferation and migration and angiogenic sprouting. Involved in the maturation of both CD4(+) and CD8(+) cells in the thymus. Important for follicular differentiation and possibly cell fate selection within the follicle. During cerebellar development, functions as a receptor for neuronal DNER and is involved in the differentiation of Bergmann glia. Represses neuronal and myogenic differentiation. May play an essential role in postimplantation development, probably in some aspect of cell specification and/or differentiation. May be involved in mesoderm development, somite formation and neurogenesis. May enhance HIF1A function by sequestering HIF1AN away from HIF1A. Required for the THBS4 function in regulating protective astrogenesis from the subventricular zone (SVZ) niche after injury. Involved in determination of left/right symmetry by modulating the balance between motile and immotile (sensory) cilia at the left-right organiser (LRO).</text>
</comment>
<comment type="subunit">
    <text evidence="2 3 8 9 10 11 14 21 24 25">Heterodimer of a C-terminal fragment N(TM) and an N-terminal fragment N(EC) which are probably linked by disulfide bonds. Interacts with DNER, DTX1, DTX2 and RBPJ/RBPSUH. Also interacts with MAML1, MAML2 and MAML3 which act as transcriptional coactivators for NOTCH1 (PubMed:11101851, PubMed:12370315). The NOTCH1 intracellular domain interacts with SNW1; the interaction involves multimerized NOTCH1 NICD and is implicated in a formation of an intermediate preactivation complex which associates with DNA-bound CBF-1/RBPJ (PubMed:10713164). The activated membrane-bound form interacts with AAK1 which promotes NOTCH1 stabilization. Forms a trimeric complex with FBXW7 and SGK1. Interacts with HIF1AN. HIF1AN negatively regulates the function of notch intracellular domain (NICD), accelerating myogenic differentiation (PubMed:17573339). Interacts (via NICD) with SNAI1 (via zinc fingers); the interaction induces SNAI1 degradation via MDM2-mediated ubiquitination and inhibits SNAI1-induced cell invasion. Interacts (via NICD) with MDM2A. Interacts (via NICD) with BCL6; the interaction decreases MAML1 recruitment by NOTCH1 NICD on target genes DNA and inhibits NOTCH1 transactivation activity. Interacts with THBS4 (By similarity). Interacts (via the EGF-like repeat region) with CCN3 (via CTCK domain) (PubMed:12050162). Interacts (via EGF-like domains) with DLL4 (via N-terminal DSL and MNNL domains) (By similarity). Interacts with ZMIZ1. Interacts (via NICD domain) with MEGF10 (via the cytoplasmic domain). Interacts with DLL1 and JAG1 (By similarity). Interacts (via NICD domain) with PRAG1 (By similarity). Forms a complex with PRAG1, N1ICD and MAML1, in a MAML1-dependent manner (By similarity). Interacts (via transmembrane region) with PSEN1; the interaction is direct (PubMed:30598546). Interacts with ZFP64 (By similarity).</text>
</comment>
<comment type="interaction">
    <interactant intactId="EBI-636374">
        <id>P46531</id>
    </interactant>
    <interactant intactId="EBI-495465">
        <id>Q13315</id>
        <label>ATM</label>
    </interactant>
    <organismsDiffer>false</organismsDiffer>
    <experiments>8</experiments>
</comment>
<comment type="interaction">
    <interactant intactId="EBI-636374">
        <id>P46531</id>
    </interactant>
    <interactant intactId="EBI-359574">
        <id>Q969H0</id>
        <label>FBXW7</label>
    </interactant>
    <organismsDiffer>false</organismsDiffer>
    <experiments>11</experiments>
</comment>
<comment type="interaction">
    <interactant intactId="EBI-636374">
        <id>P46531</id>
    </interactant>
    <interactant intactId="EBI-447269">
        <id>Q16665</id>
        <label>HIF1A</label>
    </interactant>
    <organismsDiffer>false</organismsDiffer>
    <experiments>2</experiments>
</comment>
<comment type="interaction">
    <interactant intactId="EBI-636374">
        <id>P46531</id>
    </interactant>
    <interactant intactId="EBI-2847071">
        <id>P78504</id>
        <label>JAG1</label>
    </interactant>
    <organismsDiffer>false</organismsDiffer>
    <experiments>6</experiments>
</comment>
<comment type="interaction">
    <interactant intactId="EBI-636374">
        <id>P46531</id>
    </interactant>
    <interactant intactId="EBI-710124">
        <id>O60341</id>
        <label>KDM1A</label>
    </interactant>
    <organismsDiffer>false</organismsDiffer>
    <experiments>8</experiments>
</comment>
<comment type="interaction">
    <interactant intactId="EBI-636374">
        <id>P46531</id>
    </interactant>
    <interactant intactId="EBI-2816428">
        <id>Q8N423</id>
        <label>LILRB2</label>
    </interactant>
    <organismsDiffer>false</organismsDiffer>
    <experiments>8</experiments>
</comment>
<comment type="interaction">
    <interactant intactId="EBI-636374">
        <id>P46531</id>
    </interactant>
    <interactant intactId="EBI-908250">
        <id>Q92585</id>
        <label>MAML1</label>
    </interactant>
    <organismsDiffer>false</organismsDiffer>
    <experiments>15</experiments>
</comment>
<comment type="interaction">
    <interactant intactId="EBI-636374">
        <id>P46531</id>
    </interactant>
    <interactant intactId="EBI-300010">
        <id>P19838</id>
        <label>NFKB1</label>
    </interactant>
    <organismsDiffer>false</organismsDiffer>
    <experiments>2</experiments>
</comment>
<comment type="interaction">
    <interactant intactId="EBI-636374">
        <id>P46531</id>
    </interactant>
    <interactant intactId="EBI-636374">
        <id>P46531</id>
        <label>NOTCH1</label>
    </interactant>
    <organismsDiffer>false</organismsDiffer>
    <experiments>6</experiments>
</comment>
<comment type="interaction">
    <interactant intactId="EBI-636374">
        <id>P46531</id>
    </interactant>
    <interactant intactId="EBI-1307">
        <id>Q13153</id>
        <label>PAK1</label>
    </interactant>
    <organismsDiffer>false</organismsDiffer>
    <experiments>4</experiments>
</comment>
<comment type="interaction">
    <interactant intactId="EBI-636374">
        <id>P46531</id>
    </interactant>
    <interactant intactId="EBI-714158">
        <id>Q13526</id>
        <label>PIN1</label>
    </interactant>
    <organismsDiffer>false</organismsDiffer>
    <experiments>14</experiments>
</comment>
<comment type="interaction">
    <interactant intactId="EBI-636374">
        <id>P46531</id>
    </interactant>
    <interactant intactId="EBI-632552">
        <id>Q06330</id>
        <label>RBPJ</label>
    </interactant>
    <organismsDiffer>false</organismsDiffer>
    <experiments>13</experiments>
</comment>
<comment type="interaction">
    <interactant intactId="EBI-636374">
        <id>P46531</id>
    </interactant>
    <interactant intactId="EBI-12599287">
        <id>Q06330-6</id>
        <label>RBPJ</label>
    </interactant>
    <organismsDiffer>false</organismsDiffer>
    <experiments>6</experiments>
</comment>
<comment type="interaction">
    <interactant intactId="EBI-636374">
        <id>P46531</id>
    </interactant>
    <interactant intactId="EBI-632715">
        <id>Q13573</id>
        <label>SNW1</label>
    </interactant>
    <organismsDiffer>false</organismsDiffer>
    <experiments>3</experiments>
</comment>
<comment type="interaction">
    <interactant intactId="EBI-636374">
        <id>P46531</id>
    </interactant>
    <interactant intactId="EBI-517127">
        <id>P98170</id>
        <label>XIAP</label>
    </interactant>
    <organismsDiffer>false</organismsDiffer>
    <experiments>4</experiments>
</comment>
<comment type="interaction">
    <interactant intactId="EBI-9692333">
        <id>PRO_0000007676</id>
    </interactant>
    <interactant intactId="EBI-2864946">
        <id>Q8IZL2</id>
        <label>MAML2</label>
    </interactant>
    <organismsDiffer>false</organismsDiffer>
    <experiments>2</experiments>
</comment>
<comment type="interaction">
    <interactant intactId="EBI-9692333">
        <id>PRO_0000007676</id>
    </interactant>
    <interactant intactId="EBI-1043855">
        <id>Q96JK9</id>
        <label>MAML3</label>
    </interactant>
    <organismsDiffer>false</organismsDiffer>
    <experiments>2</experiments>
</comment>
<comment type="subcellular location">
    <subcellularLocation>
        <location evidence="2">Cell membrane</location>
        <topology evidence="28">Single-pass type I membrane protein</topology>
    </subcellularLocation>
    <subcellularLocation>
        <location evidence="17">Late endosome membrane</location>
        <topology evidence="28">Single-pass type I membrane protein</topology>
    </subcellularLocation>
    <text evidence="17">Non-activated receptor is targeted for lysosomal degradation via the endosomal pathway; transport from late endosomes to lysosomes requires deuibiquitination by USP12.</text>
</comment>
<comment type="subcellular location">
    <molecule>Notch 1 intracellular domain</molecule>
    <subcellularLocation>
        <location evidence="2">Nucleus</location>
    </subcellularLocation>
    <text evidence="2">Following proteolytical processing NICD is translocated to the nucleus. Nuclear location may require MEGF10.</text>
</comment>
<comment type="tissue specificity">
    <text>In fetal tissues most abundant in spleen, brain stem and lung. Also present in most adult tissues where it is found mainly in lymphoid tissues.</text>
</comment>
<comment type="domain">
    <text evidence="24">Interaction with PSEN1 causes partial unwinding of the transmembrane helix, facilitating access to the scissile peptide bond.</text>
</comment>
<comment type="PTM">
    <text evidence="2 19 24">Synthesized in the endoplasmic reticulum as an inactive form which is proteolytically cleaved by a furin-like convertase in the trans-Golgi network before it reaches the plasma membrane to yield an active, ligand-accessible form (By similarity). Cleavage results in a C-terminal fragment N(TM) and a N-terminal fragment N(EC). Following ligand binding, it is cleaved by ADAM17 to yield a membrane-associated intermediate fragment called notch extracellular truncation (NEXT) (PubMed:24226769). Following endocytosis, this fragment is then cleaved by one of the catalytic subunits of gamma-secretase (PSEN1 or PSEN2), to release a Notch-derived peptide containing the intracellular domain (NICD) from the membrane (PubMed:30598546).</text>
</comment>
<comment type="PTM">
    <text evidence="1">Phosphorylated.</text>
</comment>
<comment type="PTM">
    <text evidence="2 3 19 23">O-glycosylated on the EGF-like domains (PubMed:24226769). O-glucosylated at Ser-435 by KDELC1 and KDELC2 (PubMed:30127001). Contains both O-linked fucose and O-linked glucose in the EGF-like domains 11, 12 and 13, which are interacting with the residues on DLL4 (By similarity). O-linked glycosylation by GALNT11 is involved in determination of left/right symmetry: glycosylation promotes activation of NOTCH1, possibly by promoting cleavage by ADAM17, modulating the balance between motile and immotile (sensory) cilia at the left-right organiser (LRO) (PubMed:24226769). MFNG-, RFNG- and LFNG-mediated modification of O-fucose residues at specific EGF-like domains results in inhibition of its activation by JAG1 and enhancement of its activation by DLL1 via an increased binding to DLL1 (By similarity).</text>
</comment>
<comment type="PTM">
    <text evidence="15 17 18 19">Ubiquitinated. Undergoes 'Lys-29'-linked polyubiquitination by ITCH; promotes the lysosomal degradation of non-activated internalized NOTCH1 (PubMed:18628966, PubMed:23886940). Deubiquitination by USP12 is required for transport of internalized non-activated receptor from late endosomes to lysosomes for degradation (PubMed:22778262). Monoubiquitination at Lys-1759 is required for activation by gamma-secretase cleavage, it promotes interaction with AAK1, which stabilizes it. Deubiquitination by EIF3F is necessary for nuclear import of activated Notch (PubMed:24226769).</text>
</comment>
<comment type="PTM">
    <text evidence="1">Hydroxylated at Asn-1955 by HIF1AN. Hydroxylated at Asn-2022 by HIF1AN (By similarity). Hydroxylation reduces affinity for HI1AN and may thus indirectly modulate negative regulation of NICD (By similarity).</text>
</comment>
<comment type="disease" evidence="13">
    <disease id="DI-01186">
        <name>Aortic valve disease 1</name>
        <acronym>AOVD1</acronym>
        <description>A common defect in the aortic valve in which two rather than three leaflets are present. It is often associated with aortic valve calcification, stenosis and insufficiency. In extreme cases, the blood flow may be so restricted that the left ventricle fails to grow, resulting in hypoplastic left heart syndrome.</description>
        <dbReference type="MIM" id="109730"/>
    </disease>
    <text>The disease is caused by variants affecting the gene represented in this entry.</text>
</comment>
<comment type="disease" evidence="20">
    <disease id="DI-04227">
        <name>Adams-Oliver syndrome 5</name>
        <acronym>AOS5</acronym>
        <description>A form of Adams-Oliver syndrome, a disorder characterized by the congenital absence of skin (aplasia cutis congenita) in combination with transverse limb defects. Aplasia cutis congenita can be located anywhere on the body, but in the vast majority of the cases, it is present on the posterior parietal region where it is often associated with an underlying defect of the parietal bones. Limb abnormalities are typically limb truncation defects affecting the distal phalanges or entire digits (true ectrodactyly). Only rarely, metatarsals/metacarpals or more proximal limb structures are also affected. Apart from transverse limb defects, syndactyly, most commonly of second and third toes, can also be observed. The clinical features are highly variable and can also include cardiovascular malformations, brain abnormalities and vascular defects such as cutis marmorata and dilated scalp veins.</description>
        <dbReference type="MIM" id="616028"/>
    </disease>
    <text>The disease is caused by variants affecting the gene represented in this entry.</text>
</comment>
<comment type="similarity">
    <text evidence="26">Belongs to the NOTCH family.</text>
</comment>
<comment type="online information" name="Atlas of Genetics and Cytogenetics in Oncology and Haematology">
    <link uri="https://atlasgeneticsoncology.org/gene/30/NOTCH1"/>
</comment>
<evidence type="ECO:0000250" key="1"/>
<evidence type="ECO:0000250" key="2">
    <source>
        <dbReference type="UniProtKB" id="Q01705"/>
    </source>
</evidence>
<evidence type="ECO:0000250" key="3">
    <source>
        <dbReference type="UniProtKB" id="Q07008"/>
    </source>
</evidence>
<evidence type="ECO:0000255" key="4"/>
<evidence type="ECO:0000255" key="5">
    <source>
        <dbReference type="PROSITE-ProRule" id="PRU00076"/>
    </source>
</evidence>
<evidence type="ECO:0000255" key="6">
    <source>
        <dbReference type="PROSITE-ProRule" id="PRU00525"/>
    </source>
</evidence>
<evidence type="ECO:0000256" key="7">
    <source>
        <dbReference type="SAM" id="MobiDB-lite"/>
    </source>
</evidence>
<evidence type="ECO:0000269" key="8">
    <source>
    </source>
</evidence>
<evidence type="ECO:0000269" key="9">
    <source>
    </source>
</evidence>
<evidence type="ECO:0000269" key="10">
    <source>
    </source>
</evidence>
<evidence type="ECO:0000269" key="11">
    <source>
    </source>
</evidence>
<evidence type="ECO:0000269" key="12">
    <source>
    </source>
</evidence>
<evidence type="ECO:0000269" key="13">
    <source>
    </source>
</evidence>
<evidence type="ECO:0000269" key="14">
    <source>
    </source>
</evidence>
<evidence type="ECO:0000269" key="15">
    <source>
    </source>
</evidence>
<evidence type="ECO:0000269" key="16">
    <source>
    </source>
</evidence>
<evidence type="ECO:0000269" key="17">
    <source>
    </source>
</evidence>
<evidence type="ECO:0000269" key="18">
    <source>
    </source>
</evidence>
<evidence type="ECO:0000269" key="19">
    <source>
    </source>
</evidence>
<evidence type="ECO:0000269" key="20">
    <source>
    </source>
</evidence>
<evidence type="ECO:0000269" key="21">
    <source>
    </source>
</evidence>
<evidence type="ECO:0000269" key="22">
    <source>
    </source>
</evidence>
<evidence type="ECO:0000269" key="23">
    <source>
    </source>
</evidence>
<evidence type="ECO:0000269" key="24">
    <source>
    </source>
</evidence>
<evidence type="ECO:0000269" key="25">
    <source>
    </source>
</evidence>
<evidence type="ECO:0000305" key="26"/>
<evidence type="ECO:0000305" key="27">
    <source>
    </source>
</evidence>
<evidence type="ECO:0000305" key="28">
    <source>
    </source>
</evidence>
<evidence type="ECO:0000312" key="29">
    <source>
        <dbReference type="Proteomes" id="UP000005640"/>
    </source>
</evidence>
<evidence type="ECO:0007829" key="30">
    <source>
        <dbReference type="PDB" id="2F8X"/>
    </source>
</evidence>
<evidence type="ECO:0007829" key="31">
    <source>
        <dbReference type="PDB" id="2F8Y"/>
    </source>
</evidence>
<evidence type="ECO:0007829" key="32">
    <source>
        <dbReference type="PDB" id="2VJ3"/>
    </source>
</evidence>
<evidence type="ECO:0007829" key="33">
    <source>
        <dbReference type="PDB" id="3ETO"/>
    </source>
</evidence>
<evidence type="ECO:0007829" key="34">
    <source>
        <dbReference type="PDB" id="3L95"/>
    </source>
</evidence>
<evidence type="ECO:0007829" key="35">
    <source>
        <dbReference type="PDB" id="4D0E"/>
    </source>
</evidence>
<evidence type="ECO:0007829" key="36">
    <source>
        <dbReference type="PDB" id="5FMA"/>
    </source>
</evidence>
<evidence type="ECO:0007829" key="37">
    <source>
        <dbReference type="PDB" id="5KZO"/>
    </source>
</evidence>
<evidence type="ECO:0007829" key="38">
    <source>
        <dbReference type="PDB" id="5L0R"/>
    </source>
</evidence>
<evidence type="ECO:0007829" key="39">
    <source>
        <dbReference type="PDB" id="6IDF"/>
    </source>
</evidence>
<evidence type="ECO:0007829" key="40">
    <source>
        <dbReference type="PDB" id="9B3N"/>
    </source>
</evidence>
<protein>
    <recommendedName>
        <fullName>Neurogenic locus notch homolog protein 1</fullName>
        <shortName>Notch 1</shortName>
        <shortName>hN1</shortName>
    </recommendedName>
    <alternativeName>
        <fullName>Translocation-associated notch protein TAN-1</fullName>
    </alternativeName>
    <component>
        <recommendedName>
            <fullName>Notch 1 extracellular truncation</fullName>
            <shortName>NEXT</shortName>
        </recommendedName>
    </component>
    <component>
        <recommendedName>
            <fullName>Notch 1 intracellular domain</fullName>
            <shortName>NICD</shortName>
        </recommendedName>
    </component>
</protein>
<name>NOTC1_HUMAN</name>
<sequence>MPPLLAPLLCLALLPALAARGPRCSQPGETCLNGGKCEAANGTEACVCGGAFVGPRCQDPNPCLSTPCKNAGTCHVVDRRGVADYACSCALGFSGPLCLTPLDNACLTNPCRNGGTCDLLTLTEYKCRCPPGWSGKSCQQADPCASNPCANGGQCLPFEASYICHCPPSFHGPTCRQDVNECGQKPGLCRHGGTCHNEVGSYRCVCRATHTGPNCERPYVPCSPSPCQNGGTCRPTGDVTHECACLPGFTGQNCEENIDDCPGNNCKNGGACVDGVNTYNCRCPPEWTGQYCTEDVDECQLMPNACQNGGTCHNTHGGYNCVCVNGWTGEDCSENIDDCASAACFHGATCHDRVASFYCECPHGRTGLLCHLNDACISNPCNEGSNCDTNPVNGKAICTCPSGYTGPACSQDVDECSLGANPCEHAGKCINTLGSFECQCLQGYTGPRCEIDVNECVSNPCQNDATCLDQIGEFQCICMPGYEGVHCEVNTDECASSPCLHNGRCLDKINEFQCECPTGFTGHLCQYDVDECASTPCKNGAKCLDGPNTYTCVCTEGYTGTHCEVDIDECDPDPCHYGSCKDGVATFTCLCRPGYTGHHCETNINECSSQPCRHGGTCQDRDNAYLCFCLKGTTGPNCEINLDDCASSPCDSGTCLDKIDGYECACEPGYTGSMCNINIDECAGNPCHNGGTCEDGINGFTCRCPEGYHDPTCLSEVNECNSNPCVHGACRDSLNGYKCDCDPGWSGTNCDINNNECESNPCVNGGTCKDMTSGYVCTCREGFSGPNCQTNINECASNPCLNQGTCIDDVAGYKCNCLLPYTGATCEVVLAPCAPSPCRNGGECRQSEDYESFSCVCPTGWQGQTCEVDINECVLSPCRHGASCQNTHGGYRCHCQAGYSGRNCETDIDDCRPNPCHNGGSCTDGINTAFCDCLPGFRGTFCEEDINECASDPCRNGANCTDCVDSYTCTCPAGFSGIHCENNTPDCTESSCFNGGTCVDGINSFTCLCPPGFTGSYCQHDVNECDSQPCLHGGTCQDGCGSYRCTCPQGYTGPNCQNLVHWCDSSPCKNGGKCWQTHTQYRCECPSGWTGLYCDVPSVSCEVAAQRQGVDVARLCQHGGLCVDAGNTHHCRCQAGYTGSYCEDLVDECSPSPCQNGATCTDYLGGYSCKCVAGYHGVNCSEEIDECLSHPCQNGGTCLDLPNTYKCSCPRGTQGVHCEINVDDCNPPVDPVSRSPKCFNNGTCVDQVGGYSCTCPPGFVGERCEGDVNECLSNPCDARGTQNCVQRVNDFHCECRAGHTGRRCESVINGCKGKPCKNGGTCAVASNTARGFICKCPAGFEGATCENDARTCGSLRCLNGGTCISGPRSPTCLCLGPFTGPECQFPASSPCLGGNPCYNQGTCEPTSESPFYRCLCPAKFNGLLCHILDYSFGGGAGRDIPPPLIEEACELPECQEDAGNKVCSLQCNNHACGWDGGDCSLNFNDPWKNCTQSLQCWKYFSDGHCDSQCNSAGCLFDGFDCQRAEGQCNPLYDQYCKDHFSDGHCDQGCNSAECEWDGLDCAEHVPERLAAGTLVVVVLMPPEQLRNSSFHFLRELSRVLHTNVVFKRDAHGQQMIFPYYGREEELRKHPIKRAAEGWAAPDALLGQVKASLLPGGSEGGRRRRELDPMDVRGSIVYLEIDNRQCVQASSQCFQSATDVAAFLGALASLGSLNIPYKIEAVQSETVEPPPPAQLHFMYVAAAAFVLLFFVGCGVLLSRKRRRQHGQLWFPEGFKVSEASKKKRREPLGEDSVGLKPLKNASDGALMDDNQNEWGDEDLETKKFRFEEPVVLPDLDDQTDHRQWTQQHLDAADLRMSAMAPTPPQGEVDADCMDVNVRGPDGFTPLMIASCSGGGLETGNSEEEEDAPAVISDFIYQGASLHNQTDRTGETALHLAARYSRSDAAKRLLEASADANIQDNMGRTPLHAAVSADAQGVFQILIRNRATDLDARMHDGTTPLILAARLAVEGMLEDLINSHADVNAVDDLGKSALHWAAAVNNVDAAVVLLKNGANKDMQNNREETPLFLAAREGSYETAKVLLDHFANRDITDHMDRLPRDIAQERMHHDIVRLLDEYNLVRSPQLHGAPLGGTPTLSPPLCSPNGYLGSLKPGVQGKKVRKPSSKGLACGSKEAKDLKARRKKSQDGKGCLLDSSGMLSPVDSLESPHGYLSDVASPPLLPSPFQQSPSVPLNHLPGMPDTHLGIGHLNVAAKPEMAALGGGGRLAFETGPPRLSHLPVASGTSTVLGSSSGGALNFTVGGSTSLNGQCEWLSRLQSGMVPNQYNPLRGSVAPGPLSTQAPSLQHGMVGPLHSSLAASALSQMMSYQGLPSTRLATQPHLVQTQQVQPQNLQMQQQNLQPANIQQQQSLQPPPPPPQPHLGVSSAASGHLGRSFLSGEPSQADVQPLGPSSLAVHTILPQESPALPTSLPSSLVPPVTAAQFLTPPSQHSYSSPVDNTPSHQLQVPEHPFLTPSPESPDQWSSSSPHSNVSDWSEGVSSPPTSMQSQIARIPEAFK</sequence>
<reference key="1">
    <citation type="submission" date="2000-09" db="EMBL/GenBank/DDBJ databases">
        <title>Complete human notch 1 (hN1) cDNA sequence.</title>
        <authorList>
            <person name="Mann R.S."/>
            <person name="Blaumueller C.M."/>
            <person name="Zagouras P."/>
        </authorList>
    </citation>
    <scope>NUCLEOTIDE SEQUENCE [MRNA]</scope>
    <source>
        <tissue>Brain</tissue>
    </source>
</reference>
<reference key="2">
    <citation type="journal article" date="2004" name="Nature">
        <title>DNA sequence and analysis of human chromosome 9.</title>
        <authorList>
            <person name="Humphray S.J."/>
            <person name="Oliver K."/>
            <person name="Hunt A.R."/>
            <person name="Plumb R.W."/>
            <person name="Loveland J.E."/>
            <person name="Howe K.L."/>
            <person name="Andrews T.D."/>
            <person name="Searle S."/>
            <person name="Hunt S.E."/>
            <person name="Scott C.E."/>
            <person name="Jones M.C."/>
            <person name="Ainscough R."/>
            <person name="Almeida J.P."/>
            <person name="Ambrose K.D."/>
            <person name="Ashwell R.I.S."/>
            <person name="Babbage A.K."/>
            <person name="Babbage S."/>
            <person name="Bagguley C.L."/>
            <person name="Bailey J."/>
            <person name="Banerjee R."/>
            <person name="Barker D.J."/>
            <person name="Barlow K.F."/>
            <person name="Bates K."/>
            <person name="Beasley H."/>
            <person name="Beasley O."/>
            <person name="Bird C.P."/>
            <person name="Bray-Allen S."/>
            <person name="Brown A.J."/>
            <person name="Brown J.Y."/>
            <person name="Burford D."/>
            <person name="Burrill W."/>
            <person name="Burton J."/>
            <person name="Carder C."/>
            <person name="Carter N.P."/>
            <person name="Chapman J.C."/>
            <person name="Chen Y."/>
            <person name="Clarke G."/>
            <person name="Clark S.Y."/>
            <person name="Clee C.M."/>
            <person name="Clegg S."/>
            <person name="Collier R.E."/>
            <person name="Corby N."/>
            <person name="Crosier M."/>
            <person name="Cummings A.T."/>
            <person name="Davies J."/>
            <person name="Dhami P."/>
            <person name="Dunn M."/>
            <person name="Dutta I."/>
            <person name="Dyer L.W."/>
            <person name="Earthrowl M.E."/>
            <person name="Faulkner L."/>
            <person name="Fleming C.J."/>
            <person name="Frankish A."/>
            <person name="Frankland J.A."/>
            <person name="French L."/>
            <person name="Fricker D.G."/>
            <person name="Garner P."/>
            <person name="Garnett J."/>
            <person name="Ghori J."/>
            <person name="Gilbert J.G.R."/>
            <person name="Glison C."/>
            <person name="Grafham D.V."/>
            <person name="Gribble S."/>
            <person name="Griffiths C."/>
            <person name="Griffiths-Jones S."/>
            <person name="Grocock R."/>
            <person name="Guy J."/>
            <person name="Hall R.E."/>
            <person name="Hammond S."/>
            <person name="Harley J.L."/>
            <person name="Harrison E.S.I."/>
            <person name="Hart E.A."/>
            <person name="Heath P.D."/>
            <person name="Henderson C.D."/>
            <person name="Hopkins B.L."/>
            <person name="Howard P.J."/>
            <person name="Howden P.J."/>
            <person name="Huckle E."/>
            <person name="Johnson C."/>
            <person name="Johnson D."/>
            <person name="Joy A.A."/>
            <person name="Kay M."/>
            <person name="Keenan S."/>
            <person name="Kershaw J.K."/>
            <person name="Kimberley A.M."/>
            <person name="King A."/>
            <person name="Knights A."/>
            <person name="Laird G.K."/>
            <person name="Langford C."/>
            <person name="Lawlor S."/>
            <person name="Leongamornlert D.A."/>
            <person name="Leversha M."/>
            <person name="Lloyd C."/>
            <person name="Lloyd D.M."/>
            <person name="Lovell J."/>
            <person name="Martin S."/>
            <person name="Mashreghi-Mohammadi M."/>
            <person name="Matthews L."/>
            <person name="McLaren S."/>
            <person name="McLay K.E."/>
            <person name="McMurray A."/>
            <person name="Milne S."/>
            <person name="Nickerson T."/>
            <person name="Nisbett J."/>
            <person name="Nordsiek G."/>
            <person name="Pearce A.V."/>
            <person name="Peck A.I."/>
            <person name="Porter K.M."/>
            <person name="Pandian R."/>
            <person name="Pelan S."/>
            <person name="Phillimore B."/>
            <person name="Povey S."/>
            <person name="Ramsey Y."/>
            <person name="Rand V."/>
            <person name="Scharfe M."/>
            <person name="Sehra H.K."/>
            <person name="Shownkeen R."/>
            <person name="Sims S.K."/>
            <person name="Skuce C.D."/>
            <person name="Smith M."/>
            <person name="Steward C.A."/>
            <person name="Swarbreck D."/>
            <person name="Sycamore N."/>
            <person name="Tester J."/>
            <person name="Thorpe A."/>
            <person name="Tracey A."/>
            <person name="Tromans A."/>
            <person name="Thomas D.W."/>
            <person name="Wall M."/>
            <person name="Wallis J.M."/>
            <person name="West A.P."/>
            <person name="Whitehead S.L."/>
            <person name="Willey D.L."/>
            <person name="Williams S.A."/>
            <person name="Wilming L."/>
            <person name="Wray P.W."/>
            <person name="Young L."/>
            <person name="Ashurst J.L."/>
            <person name="Coulson A."/>
            <person name="Blocker H."/>
            <person name="Durbin R.M."/>
            <person name="Sulston J.E."/>
            <person name="Hubbard T."/>
            <person name="Jackson M.J."/>
            <person name="Bentley D.R."/>
            <person name="Beck S."/>
            <person name="Rogers J."/>
            <person name="Dunham I."/>
        </authorList>
    </citation>
    <scope>NUCLEOTIDE SEQUENCE [LARGE SCALE GENOMIC DNA]</scope>
</reference>
<reference key="3">
    <citation type="journal article" date="1991" name="Cell">
        <title>TAN-1, the human homolog of the Drosophila notch gene, is broken by chromosomal translocations in T lymphoblastic neoplasms.</title>
        <authorList>
            <person name="Ellisen L.W."/>
            <person name="Bird J."/>
            <person name="West D.C."/>
            <person name="Soreng A.L."/>
            <person name="Reynolds T.C."/>
            <person name="Smith S.D."/>
            <person name="Sklar J."/>
        </authorList>
    </citation>
    <scope>NUCLEOTIDE SEQUENCE [MRNA] OF 1-2443</scope>
</reference>
<reference key="4">
    <citation type="submission" date="2005-03" db="EMBL/GenBank/DDBJ databases">
        <authorList>
            <person name="Totoki Y."/>
            <person name="Toyoda A."/>
            <person name="Takeda T."/>
            <person name="Sakaki Y."/>
            <person name="Tanaka A."/>
            <person name="Yokoyama S."/>
            <person name="Ohara O."/>
            <person name="Nagase T."/>
            <person name="Kikuno R.F."/>
        </authorList>
    </citation>
    <scope>NUCLEOTIDE SEQUENCE [LARGE SCALE MRNA] OF 489-2555</scope>
    <source>
        <tissue>Aortic endothelium</tissue>
    </source>
</reference>
<reference key="5">
    <citation type="journal article" date="2007" name="J. Biol. Chem.">
        <title>Asparaginyl hydroxylation of the Notch ankyrin repeat domain by factor inhibiting hypoxia-inducible factor.</title>
        <authorList>
            <person name="Coleman M.L."/>
            <person name="McDonough M.A."/>
            <person name="Hewitson K.S."/>
            <person name="Coles C."/>
            <person name="Mecinovic J."/>
            <person name="Edelmann M."/>
            <person name="Cook K.M."/>
            <person name="Cockman M.E."/>
            <person name="Lancaster D.E."/>
            <person name="Kessler B.M."/>
            <person name="Oldham N.J."/>
            <person name="Ratcliffe P.J."/>
            <person name="Schofield C.J."/>
        </authorList>
    </citation>
    <scope>PROTEIN SEQUENCE OF 1947-1962</scope>
    <scope>INTERACTION WITH HIF1AN</scope>
    <scope>HYDROXYLATION AT ASN-1955</scope>
    <scope>IDENTIFICATION BY MASS SPECTROMETRY</scope>
</reference>
<reference key="6">
    <citation type="journal article" date="1999" name="Am. J. Pathol.">
        <title>Human ligands of the Notch receptor.</title>
        <authorList>
            <person name="Gray G.E."/>
            <person name="Mann R.S."/>
            <person name="Mitsiadis E."/>
            <person name="Henrique D."/>
            <person name="Carcangiu M.-L."/>
            <person name="Banks A."/>
            <person name="Leiman J."/>
            <person name="Ward D."/>
            <person name="Ish-Horowitz D."/>
            <person name="Artavanis-Tsakonas S."/>
        </authorList>
    </citation>
    <scope>IDENTIFICATION OF LIGANDS</scope>
</reference>
<reference key="7">
    <citation type="journal article" date="1998" name="Nat. Genet.">
        <title>Human deltex is a conserved regulator of Notch signalling.</title>
        <authorList>
            <person name="Matsuno K."/>
            <person name="Eastman D."/>
            <person name="Mitsiades T."/>
            <person name="Quinn A.M."/>
            <person name="Carcanciu M.L."/>
            <person name="Ordentlich P."/>
            <person name="Kadesch T."/>
            <person name="Artavanis-Tsakonas S."/>
        </authorList>
    </citation>
    <scope>INTERACTION WITH DTX1</scope>
</reference>
<reference key="8">
    <citation type="journal article" date="2000" name="Mol. Cell. Biol.">
        <title>SKIP, a CBF1-associated protein, interacts with the ankyrin repeat domain of NotchIC To facilitate NotchIC function.</title>
        <authorList>
            <person name="Zhou S."/>
            <person name="Fujimuro M."/>
            <person name="Hsieh J.J."/>
            <person name="Chen L."/>
            <person name="Miyamoto A."/>
            <person name="Weinmaster G."/>
            <person name="Hayward S.D."/>
        </authorList>
    </citation>
    <scope>INTERACTION WITH SNW1</scope>
</reference>
<reference key="9">
    <citation type="journal article" date="2000" name="Nat. Genet.">
        <title>MAML1, a human homologue of Drosophila mastermind, is a transcriptional co-activator for NOTCH receptors.</title>
        <authorList>
            <person name="Wu L."/>
            <person name="Aster J.C."/>
            <person name="Blacklow S.C."/>
            <person name="Lake R."/>
            <person name="Artavanis-Tsakonas S."/>
            <person name="Griffin J.D."/>
        </authorList>
    </citation>
    <scope>INTERACTION WITH MAML1</scope>
</reference>
<reference key="10">
    <citation type="journal article" date="2002" name="Mol. Cell. Biol.">
        <title>Identification of a family of mastermind-like transcriptional coactivators for mammalian notch receptors.</title>
        <authorList>
            <person name="Wu L."/>
            <person name="Sun T."/>
            <person name="Kobayashi K."/>
            <person name="Gao P."/>
            <person name="Griffin J.D."/>
        </authorList>
    </citation>
    <scope>INTERACTION WITH MAML2 AND MAML3</scope>
</reference>
<reference key="11">
    <citation type="journal article" date="2002" name="J. Biol. Chem.">
        <title>The nephroblastoma overexpressed gene (NOV/ccn3) protein associates with Notch1 extracellular domain and inhibits myoblast differentiation via Notch signaling pathway.</title>
        <authorList>
            <person name="Sakamoto K."/>
            <person name="Yamaguchi S."/>
            <person name="Ando R."/>
            <person name="Miyawaki A."/>
            <person name="Kabasawa Y."/>
            <person name="Takagi M."/>
            <person name="Li C.L."/>
            <person name="Perbal B."/>
            <person name="Katsube K."/>
        </authorList>
    </citation>
    <scope>INTERACTION WITH CCN3</scope>
</reference>
<reference key="12">
    <citation type="journal article" date="2005" name="Nature">
        <title>Mutations in NOTCH1 cause aortic valve disease.</title>
        <authorList>
            <person name="Garg V."/>
            <person name="Muth A.N."/>
            <person name="Ransom J.F."/>
            <person name="Schluterman M.K."/>
            <person name="Barnes R."/>
            <person name="King I.N."/>
            <person name="Grossfeld P.D."/>
            <person name="Srivastava D."/>
        </authorList>
    </citation>
    <scope>INVOLVEMENT IN AOVD1</scope>
</reference>
<reference key="13">
    <citation type="journal article" date="2008" name="PLoS ONE">
        <title>AIP4/Itch regulates Notch receptor degradation in the absence of ligand.</title>
        <authorList>
            <person name="Chastagner P."/>
            <person name="Israel A."/>
            <person name="Brou C."/>
        </authorList>
    </citation>
    <scope>UBIQUITINATION BY ITCH</scope>
</reference>
<reference key="14">
    <citation type="journal article" date="2008" name="Proc. Natl. Acad. Sci. U.S.A.">
        <title>A quantitative atlas of mitotic phosphorylation.</title>
        <authorList>
            <person name="Dephoure N."/>
            <person name="Zhou C."/>
            <person name="Villen J."/>
            <person name="Beausoleil S.A."/>
            <person name="Bakalarski C.E."/>
            <person name="Elledge S.J."/>
            <person name="Gygi S.P."/>
        </authorList>
    </citation>
    <scope>IDENTIFICATION BY MASS SPECTROMETRY [LARGE SCALE ANALYSIS]</scope>
    <source>
        <tissue>Cervix carcinoma</tissue>
    </source>
</reference>
<reference key="15">
    <citation type="journal article" date="2010" name="Circ. Res.">
        <title>Integrin cytoplasmic domain-associated protein-1 attenuates sprouting angiogenesis.</title>
        <authorList>
            <person name="Brutsch R."/>
            <person name="Liebler S.S."/>
            <person name="Wustehube J."/>
            <person name="Bartol A."/>
            <person name="Herberich S.E."/>
            <person name="Adam M.G."/>
            <person name="Telzerow A."/>
            <person name="Augustin H.G."/>
            <person name="Fischer A."/>
        </authorList>
    </citation>
    <scope>FUNCTION</scope>
</reference>
<reference key="16">
    <citation type="journal article" date="2011" name="BMC Biol.">
        <title>Notch1 binds and induces degradation of Snail in hepatocellular carcinoma.</title>
        <authorList>
            <person name="Lim S.O."/>
            <person name="Kim H.S."/>
            <person name="Quan X."/>
            <person name="Ahn S.M."/>
            <person name="Kim H."/>
            <person name="Hsieh D."/>
            <person name="Seong J.K."/>
            <person name="Jung G."/>
        </authorList>
    </citation>
    <scope>INTERACTION WITH SNAI1 AND MDM2A</scope>
</reference>
<reference key="17">
    <citation type="journal article" date="2011" name="J. Biol. Chem.">
        <title>The adaptor-associated kinase 1, AAK1, is a positive regulator of the Notch pathway.</title>
        <authorList>
            <person name="Gupta-Rossi N."/>
            <person name="Ortica S."/>
            <person name="Meas-Yedid V."/>
            <person name="Heuss S."/>
            <person name="Moretti J."/>
            <person name="Olivo-Marin J.C."/>
            <person name="Israel A."/>
        </authorList>
    </citation>
    <scope>INTERACTION WITH AAK1</scope>
</reference>
<reference key="18">
    <citation type="journal article" date="2011" name="J. Cell Sci.">
        <title>Serum- and glucocorticoid-inducible kinase 1 (SGK1) controls Notch1 signaling by downregulation of protein stability through Fbw7 ubiquitin ligase.</title>
        <authorList>
            <person name="Mo J.S."/>
            <person name="Ann E.J."/>
            <person name="Yoon J.H."/>
            <person name="Jung J."/>
            <person name="Choi Y.H."/>
            <person name="Kim H.Y."/>
            <person name="Ahn J.S."/>
            <person name="Kim S.M."/>
            <person name="Kim M.Y."/>
            <person name="Hong J.A."/>
            <person name="Seo M.S."/>
            <person name="Lang F."/>
            <person name="Choi E.J."/>
            <person name="Park H.S."/>
        </authorList>
    </citation>
    <scope>INTERACTION WITH SGK1 AND FBXW7</scope>
</reference>
<reference key="19">
    <citation type="journal article" date="2011" name="Mol. Cell. Biol.">
        <title>Assembly of a Notch transcriptional activation complex requires multimerization.</title>
        <authorList>
            <person name="Vasquez-Del Carpio R."/>
            <person name="Kaplan F.M."/>
            <person name="Weaver K.L."/>
            <person name="VanWye J.D."/>
            <person name="Alves-Guerra M.C."/>
            <person name="Robbins D.J."/>
            <person name="Capobianco A.J."/>
        </authorList>
    </citation>
    <scope>INTERACTION WITH SNW1</scope>
</reference>
<reference key="20">
    <citation type="journal article" date="2012" name="J. Biol. Chem.">
        <title>The ubiquitin-specific protease 12 (USP12) is a negative regulator of notch signaling acting on notch receptor trafficking toward degradation.</title>
        <authorList>
            <person name="Moretti J."/>
            <person name="Chastagner P."/>
            <person name="Liang C.C."/>
            <person name="Cohn M.A."/>
            <person name="Israel A."/>
            <person name="Brou C."/>
        </authorList>
    </citation>
    <scope>SUBCELLULAR LOCATION</scope>
    <scope>DEUBIQUITINATION BY USP12</scope>
</reference>
<reference key="21">
    <citation type="journal article" date="2013" name="J. Cell Sci.">
        <title>Alpha-arrestin 1 (ARRDC1) and beta-arrestins cooperate to mediate Notch degradation in mammals.</title>
        <authorList>
            <person name="Puca L."/>
            <person name="Chastagner P."/>
            <person name="Meas-Yedid V."/>
            <person name="Israel A."/>
            <person name="Brou C."/>
        </authorList>
    </citation>
    <scope>UBIQUITINATION BY ITCH</scope>
</reference>
<reference key="22">
    <citation type="journal article" date="2013" name="Nature">
        <title>The heterotaxy gene GALNT11 glycosylates Notch to orchestrate cilia type and laterality.</title>
        <authorList>
            <person name="Boskovski M.T."/>
            <person name="Yuan S."/>
            <person name="Pedersen N.B."/>
            <person name="Goth C.K."/>
            <person name="Makova S."/>
            <person name="Clausen H."/>
            <person name="Brueckner M."/>
            <person name="Khokha M.K."/>
        </authorList>
    </citation>
    <scope>GLYCOSYLATION AT THR-232; THR-1402 AND THR-1725</scope>
    <scope>PROTEOLYTIC PROCESSING</scope>
</reference>
<reference key="23">
    <citation type="journal article" date="2014" name="BMC Bioinformatics">
        <title>Identifying tandem Ankyrin repeats in protein structures.</title>
        <authorList>
            <person name="Chakrabarty B."/>
            <person name="Parekh N."/>
        </authorList>
    </citation>
    <scope>ANKYRIN REPEATS</scope>
</reference>
<reference key="24">
    <citation type="journal article" date="2015" name="Immunity">
        <title>The PIAS-like coactivator Zmiz1 is a direct and selective cofactor of Notch1 in T cell development and leukemia.</title>
        <authorList>
            <person name="Pinnell N."/>
            <person name="Yan R."/>
            <person name="Cho H.J."/>
            <person name="Keeley T."/>
            <person name="Murai M.J."/>
            <person name="Liu Y."/>
            <person name="Alarcon A.S."/>
            <person name="Qin J."/>
            <person name="Wang Q."/>
            <person name="Kuick R."/>
            <person name="Elenitoba-Johnson K.S."/>
            <person name="Maillard I."/>
            <person name="Samuelson L.C."/>
            <person name="Cierpicki T."/>
            <person name="Chiang M.Y."/>
        </authorList>
    </citation>
    <scope>INTERACTION WITH ZMIZ1</scope>
</reference>
<reference key="25">
    <citation type="journal article" date="2018" name="Proc. Natl. Acad. Sci. U.S.A.">
        <title>Two novel protein O-glucosyltransferases that modify sites distinct from POGLUT1 and affect Notch trafficking and signaling.</title>
        <authorList>
            <person name="Takeuchi H."/>
            <person name="Schneider M."/>
            <person name="Williamson D.B."/>
            <person name="Ito A."/>
            <person name="Takeuchi M."/>
            <person name="Handford P.A."/>
            <person name="Haltiwanger R.S."/>
        </authorList>
    </citation>
    <scope>GLYCOSYLATION AT SER-435</scope>
</reference>
<reference key="26">
    <citation type="journal article" date="2003" name="Biochemistry">
        <title>Nuclear magnetic resonance structure of a prototype Lin12-Notch repeat module from human Notch1.</title>
        <authorList>
            <person name="Vardar D."/>
            <person name="North C.L."/>
            <person name="Sanchez-Irizarry C."/>
            <person name="Aster J.C."/>
            <person name="Blacklow S.C."/>
        </authorList>
    </citation>
    <scope>STRUCTURE BY NMR OF 1446-1480 IN COMPLEX WITH CALCIUM IONS</scope>
    <scope>DISULFIDE BONDS</scope>
</reference>
<reference key="27">
    <citation type="journal article" date="2004" name="Structure">
        <title>Structural and functional properties of the human notch-1 ligand binding region.</title>
        <authorList>
            <person name="Hambleton S."/>
            <person name="Valeyev N.V."/>
            <person name="Muranyi A."/>
            <person name="Knott V."/>
            <person name="Werner J.M."/>
            <person name="McMichael A.J."/>
            <person name="Handford P.A."/>
            <person name="Downing A.K."/>
        </authorList>
    </citation>
    <scope>STRUCTURE BY NMR OF 411-526</scope>
</reference>
<reference key="28">
    <citation type="journal article" date="2005" name="Biochem. J.">
        <title>High-resolution crystal structure of the human Notch 1 ankyrin domain.</title>
        <authorList>
            <person name="Ehebauer M.T."/>
            <person name="Chirgadze D.Y."/>
            <person name="Hayward P."/>
            <person name="Martinez Arias A."/>
            <person name="Blundell T.L."/>
        </authorList>
    </citation>
    <scope>X-RAY CRYSTALLOGRAPHY (1.9 ANGSTROMS) OF 1872-2114</scope>
</reference>
<reference key="29">
    <citation type="journal article" date="2006" name="Cell">
        <title>Structural basis for cooperativity in recruitment of MAML coactivators to Notch transcription complexes.</title>
        <authorList>
            <person name="Nam Y."/>
            <person name="Sliz P."/>
            <person name="Song L."/>
            <person name="Aster J.C."/>
            <person name="Blacklow S.C."/>
        </authorList>
    </citation>
    <scope>X-RAY CRYSTALLOGRAPHY (3.25 ANGSTROMS) OF 1872-2126 IN COMPLEX WITH RBPSUH AND MAML1</scope>
</reference>
<reference key="30">
    <citation type="journal article" date="2017" name="Sci. Adv.">
        <title>Structural and biochemical differences between the Notch and the amyloid precursor protein transmembrane domains.</title>
        <authorList>
            <person name="Deatherage C.L."/>
            <person name="Lu Z."/>
            <person name="Kroncke B.M."/>
            <person name="Ma S."/>
            <person name="Smith J.A."/>
            <person name="Voehler M.W."/>
            <person name="McFeeters R.L."/>
            <person name="Sanders C.R."/>
        </authorList>
    </citation>
    <scope>STRUCTURE BY NMR OF 1721-1771</scope>
    <scope>TOPOLOGY</scope>
</reference>
<reference key="31">
    <citation type="journal article" date="2019" name="Nature">
        <title>Structural basis of Notch recognition by human gamma-secretase.</title>
        <authorList>
            <person name="Yang G."/>
            <person name="Zhou R."/>
            <person name="Zhou Q."/>
            <person name="Guo X."/>
            <person name="Yan C."/>
            <person name="Ke M."/>
            <person name="Lei J."/>
            <person name="Shi Y."/>
        </authorList>
    </citation>
    <scope>STRUCTURE BY ELECTRON MICROSCOPY (2.70 ANGSTROMS) OF 1721-1821 IN COMPLEX WITH GAMMA-SECRETASE</scope>
    <scope>SUBUNIT</scope>
    <scope>TOPOLOGY</scope>
    <scope>INTERACTION WITH PSEN1</scope>
    <scope>PROTEOLYTIC CLEAVAGE BY PSEN1</scope>
    <scope>DOMAIN</scope>
    <scope>MUTAGENESIS OF PRO-1728 AND 1755-LEU--ARG-1761</scope>
</reference>
<reference key="32">
    <citation type="journal article" date="2014" name="Am. J. Hum. Genet.">
        <title>Mutations in NOTCH1 cause Adams-Oliver syndrome.</title>
        <authorList>
            <person name="Stittrich A.B."/>
            <person name="Lehman A."/>
            <person name="Bodian D.L."/>
            <person name="Ashworth J."/>
            <person name="Zong Z."/>
            <person name="Li H."/>
            <person name="Lam P."/>
            <person name="Khromykh A."/>
            <person name="Iyer R.K."/>
            <person name="Vockley J.G."/>
            <person name="Baveja R."/>
            <person name="Silva E.S."/>
            <person name="Dixon J."/>
            <person name="Leon E.L."/>
            <person name="Solomon B.D."/>
            <person name="Glusman G."/>
            <person name="Niederhuber J.E."/>
            <person name="Roach J.C."/>
            <person name="Patel M.S."/>
        </authorList>
    </citation>
    <scope>INVOLVEMENT IN AOS5</scope>
    <scope>VARIANTS AOS5 ARG-429; TYR-1496 AND ASN-1989</scope>
</reference>
<organism evidence="29">
    <name type="scientific">Homo sapiens</name>
    <name type="common">Human</name>
    <dbReference type="NCBI Taxonomy" id="9606"/>
    <lineage>
        <taxon>Eukaryota</taxon>
        <taxon>Metazoa</taxon>
        <taxon>Chordata</taxon>
        <taxon>Craniata</taxon>
        <taxon>Vertebrata</taxon>
        <taxon>Euteleostomi</taxon>
        <taxon>Mammalia</taxon>
        <taxon>Eutheria</taxon>
        <taxon>Euarchontoglires</taxon>
        <taxon>Primates</taxon>
        <taxon>Haplorrhini</taxon>
        <taxon>Catarrhini</taxon>
        <taxon>Hominidae</taxon>
        <taxon>Homo</taxon>
    </lineage>
</organism>
<keyword id="KW-0002">3D-structure</keyword>
<keyword id="KW-0010">Activator</keyword>
<keyword id="KW-0037">Angiogenesis</keyword>
<keyword id="KW-0040">ANK repeat</keyword>
<keyword id="KW-0106">Calcium</keyword>
<keyword id="KW-1003">Cell membrane</keyword>
<keyword id="KW-0217">Developmental protein</keyword>
<keyword id="KW-0221">Differentiation</keyword>
<keyword id="KW-0903">Direct protein sequencing</keyword>
<keyword id="KW-0225">Disease variant</keyword>
<keyword id="KW-1015">Disulfide bond</keyword>
<keyword id="KW-0245">EGF-like domain</keyword>
<keyword id="KW-0967">Endosome</keyword>
<keyword id="KW-0325">Glycoprotein</keyword>
<keyword id="KW-0379">Hydroxylation</keyword>
<keyword id="KW-1017">Isopeptide bond</keyword>
<keyword id="KW-0472">Membrane</keyword>
<keyword id="KW-0479">Metal-binding</keyword>
<keyword id="KW-0914">Notch signaling pathway</keyword>
<keyword id="KW-0539">Nucleus</keyword>
<keyword id="KW-0597">Phosphoprotein</keyword>
<keyword id="KW-1267">Proteomics identification</keyword>
<keyword id="KW-0675">Receptor</keyword>
<keyword id="KW-1185">Reference proteome</keyword>
<keyword id="KW-0677">Repeat</keyword>
<keyword id="KW-0732">Signal</keyword>
<keyword id="KW-0804">Transcription</keyword>
<keyword id="KW-0805">Transcription regulation</keyword>
<keyword id="KW-0812">Transmembrane</keyword>
<keyword id="KW-1133">Transmembrane helix</keyword>
<keyword id="KW-0832">Ubl conjugation</keyword>
<gene>
    <name type="primary">NOTCH1</name>
    <name type="synonym">TAN1</name>
</gene>
<proteinExistence type="evidence at protein level"/>
<accession>P46531</accession>
<accession>Q59ED8</accession>
<accession>Q5SXM3</accession>
<dbReference type="EMBL" id="AF308602">
    <property type="protein sequence ID" value="AAG33848.1"/>
    <property type="molecule type" value="mRNA"/>
</dbReference>
<dbReference type="EMBL" id="AL592301">
    <property type="status" value="NOT_ANNOTATED_CDS"/>
    <property type="molecule type" value="Genomic_DNA"/>
</dbReference>
<dbReference type="EMBL" id="AL354671">
    <property type="status" value="NOT_ANNOTATED_CDS"/>
    <property type="molecule type" value="Genomic_DNA"/>
</dbReference>
<dbReference type="EMBL" id="M73980">
    <property type="protein sequence ID" value="AAA60614.1"/>
    <property type="molecule type" value="mRNA"/>
</dbReference>
<dbReference type="EMBL" id="AB209873">
    <property type="protein sequence ID" value="BAD93110.1"/>
    <property type="molecule type" value="mRNA"/>
</dbReference>
<dbReference type="CCDS" id="CCDS43905.1"/>
<dbReference type="PIR" id="A40043">
    <property type="entry name" value="A40043"/>
</dbReference>
<dbReference type="RefSeq" id="NP_060087.3">
    <property type="nucleotide sequence ID" value="NM_017617.4"/>
</dbReference>
<dbReference type="PDB" id="1PB5">
    <property type="method" value="NMR"/>
    <property type="chains" value="A=1446-1480"/>
</dbReference>
<dbReference type="PDB" id="1TOZ">
    <property type="method" value="NMR"/>
    <property type="chains" value="A=411-526"/>
</dbReference>
<dbReference type="PDB" id="1YYH">
    <property type="method" value="X-ray"/>
    <property type="resolution" value="1.90 A"/>
    <property type="chains" value="A/B=1872-2114"/>
</dbReference>
<dbReference type="PDB" id="2F8X">
    <property type="method" value="X-ray"/>
    <property type="resolution" value="3.25 A"/>
    <property type="chains" value="K=1872-2126"/>
</dbReference>
<dbReference type="PDB" id="2F8Y">
    <property type="method" value="X-ray"/>
    <property type="resolution" value="1.55 A"/>
    <property type="chains" value="A/B=1905-2126"/>
</dbReference>
<dbReference type="PDB" id="2HE0">
    <property type="method" value="X-ray"/>
    <property type="resolution" value="1.90 A"/>
    <property type="chains" value="A/B=1872-2114"/>
</dbReference>
<dbReference type="PDB" id="2VJ3">
    <property type="method" value="X-ray"/>
    <property type="resolution" value="2.60 A"/>
    <property type="chains" value="A=411-526"/>
</dbReference>
<dbReference type="PDB" id="3ETO">
    <property type="method" value="X-ray"/>
    <property type="resolution" value="2.00 A"/>
    <property type="chains" value="A/B=1446-1733"/>
</dbReference>
<dbReference type="PDB" id="3I08">
    <property type="method" value="X-ray"/>
    <property type="resolution" value="3.20 A"/>
    <property type="chains" value="A/C=1446-1664, B/D=1665-1733"/>
</dbReference>
<dbReference type="PDB" id="3L95">
    <property type="method" value="X-ray"/>
    <property type="resolution" value="2.19 A"/>
    <property type="chains" value="X/Y=1448-1728"/>
</dbReference>
<dbReference type="PDB" id="3NBN">
    <property type="method" value="X-ray"/>
    <property type="resolution" value="3.45 A"/>
    <property type="chains" value="B/E=1872-2126"/>
</dbReference>
<dbReference type="PDB" id="3V79">
    <property type="method" value="X-ray"/>
    <property type="resolution" value="3.85 A"/>
    <property type="chains" value="K=1872-2126, R=1759-1777"/>
</dbReference>
<dbReference type="PDB" id="4CUD">
    <property type="method" value="X-ray"/>
    <property type="resolution" value="1.85 A"/>
    <property type="chains" value="A=411-526"/>
</dbReference>
<dbReference type="PDB" id="4CUE">
    <property type="method" value="X-ray"/>
    <property type="resolution" value="3.00 A"/>
    <property type="chains" value="A=411-526"/>
</dbReference>
<dbReference type="PDB" id="4CUF">
    <property type="method" value="X-ray"/>
    <property type="resolution" value="2.29 A"/>
    <property type="chains" value="A=411-526"/>
</dbReference>
<dbReference type="PDB" id="4D0E">
    <property type="method" value="X-ray"/>
    <property type="resolution" value="1.61 A"/>
    <property type="chains" value="A=411-526"/>
</dbReference>
<dbReference type="PDB" id="4D0F">
    <property type="method" value="X-ray"/>
    <property type="resolution" value="2.80 A"/>
    <property type="chains" value="A=411-526"/>
</dbReference>
<dbReference type="PDB" id="5FM9">
    <property type="method" value="X-ray"/>
    <property type="resolution" value="2.92 A"/>
    <property type="chains" value="A=140-294"/>
</dbReference>
<dbReference type="PDB" id="5FMA">
    <property type="method" value="X-ray"/>
    <property type="resolution" value="2.46 A"/>
    <property type="chains" value="A/B=142-294"/>
</dbReference>
<dbReference type="PDB" id="5KZO">
    <property type="method" value="NMR"/>
    <property type="chains" value="A=1721-1771"/>
</dbReference>
<dbReference type="PDB" id="5L0R">
    <property type="method" value="X-ray"/>
    <property type="resolution" value="1.50 A"/>
    <property type="chains" value="B=452-491"/>
</dbReference>
<dbReference type="PDB" id="5UB5">
    <property type="method" value="X-ray"/>
    <property type="resolution" value="2.09 A"/>
    <property type="chains" value="B=452-491"/>
</dbReference>
<dbReference type="PDB" id="6IDF">
    <property type="method" value="EM"/>
    <property type="resolution" value="2.70 A"/>
    <property type="chains" value="E=1721-1821"/>
</dbReference>
<dbReference type="PDB" id="6PY8">
    <property type="method" value="X-ray"/>
    <property type="resolution" value="3.75 A"/>
    <property type="chains" value="F/K=1759-2127"/>
</dbReference>
<dbReference type="PDB" id="8OR5">
    <property type="method" value="NMR"/>
    <property type="chains" value="A=1734-1760"/>
</dbReference>
<dbReference type="PDB" id="8ORY">
    <property type="method" value="NMR"/>
    <property type="chains" value="A=1734-1757"/>
</dbReference>
<dbReference type="PDB" id="8ORZ">
    <property type="method" value="NMR"/>
    <property type="chains" value="A=1734-1757"/>
</dbReference>
<dbReference type="PDB" id="9B3G">
    <property type="method" value="X-ray"/>
    <property type="resolution" value="1.55 A"/>
    <property type="chains" value="A=790-906"/>
</dbReference>
<dbReference type="PDB" id="9B3N">
    <property type="method" value="X-ray"/>
    <property type="resolution" value="1.50 A"/>
    <property type="chains" value="A=753-944"/>
</dbReference>
<dbReference type="PDBsum" id="1PB5"/>
<dbReference type="PDBsum" id="1TOZ"/>
<dbReference type="PDBsum" id="1YYH"/>
<dbReference type="PDBsum" id="2F8X"/>
<dbReference type="PDBsum" id="2F8Y"/>
<dbReference type="PDBsum" id="2HE0"/>
<dbReference type="PDBsum" id="2VJ3"/>
<dbReference type="PDBsum" id="3ETO"/>
<dbReference type="PDBsum" id="3I08"/>
<dbReference type="PDBsum" id="3L95"/>
<dbReference type="PDBsum" id="3NBN"/>
<dbReference type="PDBsum" id="3V79"/>
<dbReference type="PDBsum" id="4CUD"/>
<dbReference type="PDBsum" id="4CUE"/>
<dbReference type="PDBsum" id="4CUF"/>
<dbReference type="PDBsum" id="4D0E"/>
<dbReference type="PDBsum" id="4D0F"/>
<dbReference type="PDBsum" id="5FM9"/>
<dbReference type="PDBsum" id="5FMA"/>
<dbReference type="PDBsum" id="5KZO"/>
<dbReference type="PDBsum" id="5L0R"/>
<dbReference type="PDBsum" id="5UB5"/>
<dbReference type="PDBsum" id="6IDF"/>
<dbReference type="PDBsum" id="6PY8"/>
<dbReference type="PDBsum" id="8OR5"/>
<dbReference type="PDBsum" id="8ORY"/>
<dbReference type="PDBsum" id="8ORZ"/>
<dbReference type="PDBsum" id="9B3G"/>
<dbReference type="PDBsum" id="9B3N"/>
<dbReference type="EMDB" id="EMD-9648"/>
<dbReference type="SASBDB" id="P46531"/>
<dbReference type="SMR" id="P46531"/>
<dbReference type="BioGRID" id="110913">
    <property type="interactions" value="365"/>
</dbReference>
<dbReference type="ComplexPortal" id="CPX-937">
    <property type="entry name" value="CSL-NOTCH1-MAML transcriptional activation complex"/>
</dbReference>
<dbReference type="CORUM" id="P46531"/>
<dbReference type="DIP" id="DIP-29919N"/>
<dbReference type="FunCoup" id="P46531">
    <property type="interactions" value="1066"/>
</dbReference>
<dbReference type="IntAct" id="P46531">
    <property type="interactions" value="218"/>
</dbReference>
<dbReference type="MINT" id="P46531"/>
<dbReference type="STRING" id="9606.ENSP00000498587"/>
<dbReference type="BindingDB" id="P46531"/>
<dbReference type="ChEMBL" id="CHEMBL2146346"/>
<dbReference type="DrugBank" id="DB12050">
    <property type="generic name" value="LY-3039478"/>
</dbReference>
<dbReference type="GuidetoPHARMACOLOGY" id="2861"/>
<dbReference type="TCDB" id="9.B.87.1.12">
    <property type="family name" value="the selenoprotein p receptor (selp-receptor) family"/>
</dbReference>
<dbReference type="GlyCosmos" id="P46531">
    <property type="glycosylation" value="54 sites, 2 glycans"/>
</dbReference>
<dbReference type="GlyGen" id="P46531">
    <property type="glycosylation" value="58 sites, 10 N-linked glycans (3 sites), 2 O-linked glycans (12 sites)"/>
</dbReference>
<dbReference type="iPTMnet" id="P46531"/>
<dbReference type="PhosphoSitePlus" id="P46531"/>
<dbReference type="SwissPalm" id="P46531"/>
<dbReference type="BioMuta" id="NOTCH1"/>
<dbReference type="DMDM" id="206729936"/>
<dbReference type="jPOST" id="P46531"/>
<dbReference type="MassIVE" id="P46531"/>
<dbReference type="PaxDb" id="9606-ENSP00000277541"/>
<dbReference type="PeptideAtlas" id="P46531"/>
<dbReference type="ProteomicsDB" id="55742"/>
<dbReference type="Pumba" id="P46531"/>
<dbReference type="ABCD" id="P46531">
    <property type="antibodies" value="195 sequenced antibodies"/>
</dbReference>
<dbReference type="Antibodypedia" id="8424">
    <property type="antibodies" value="1403 antibodies from 56 providers"/>
</dbReference>
<dbReference type="DNASU" id="4851"/>
<dbReference type="Ensembl" id="ENST00000651671.1">
    <property type="protein sequence ID" value="ENSP00000498587.1"/>
    <property type="gene ID" value="ENSG00000148400.13"/>
</dbReference>
<dbReference type="GeneID" id="4851"/>
<dbReference type="KEGG" id="hsa:4851"/>
<dbReference type="MANE-Select" id="ENST00000651671.1">
    <property type="protein sequence ID" value="ENSP00000498587.1"/>
    <property type="RefSeq nucleotide sequence ID" value="NM_017617.5"/>
    <property type="RefSeq protein sequence ID" value="NP_060087.3"/>
</dbReference>
<dbReference type="UCSC" id="uc004chz.4">
    <property type="organism name" value="human"/>
</dbReference>
<dbReference type="AGR" id="HGNC:7881"/>
<dbReference type="CTD" id="4851"/>
<dbReference type="DisGeNET" id="4851"/>
<dbReference type="GeneCards" id="NOTCH1"/>
<dbReference type="HGNC" id="HGNC:7881">
    <property type="gene designation" value="NOTCH1"/>
</dbReference>
<dbReference type="HPA" id="ENSG00000148400">
    <property type="expression patterns" value="Low tissue specificity"/>
</dbReference>
<dbReference type="MalaCards" id="NOTCH1"/>
<dbReference type="MIM" id="109730">
    <property type="type" value="phenotype"/>
</dbReference>
<dbReference type="MIM" id="190198">
    <property type="type" value="gene"/>
</dbReference>
<dbReference type="MIM" id="616028">
    <property type="type" value="phenotype"/>
</dbReference>
<dbReference type="neXtProt" id="NX_P46531"/>
<dbReference type="OpenTargets" id="ENSG00000148400"/>
<dbReference type="Orphanet" id="974">
    <property type="disease" value="Adams-Oliver syndrome"/>
</dbReference>
<dbReference type="Orphanet" id="402075">
    <property type="disease" value="Familial bicuspid aortic valve"/>
</dbReference>
<dbReference type="PharmGKB" id="PA31683"/>
<dbReference type="VEuPathDB" id="HostDB:ENSG00000148400"/>
<dbReference type="eggNOG" id="KOG1217">
    <property type="taxonomic scope" value="Eukaryota"/>
</dbReference>
<dbReference type="GeneTree" id="ENSGT00940000157157"/>
<dbReference type="HOGENOM" id="CLU_000576_2_0_1"/>
<dbReference type="InParanoid" id="P46531"/>
<dbReference type="OMA" id="TCHEQRD"/>
<dbReference type="OrthoDB" id="283575at2759"/>
<dbReference type="PAN-GO" id="P46531">
    <property type="GO annotations" value="5 GO annotations based on evolutionary models"/>
</dbReference>
<dbReference type="PhylomeDB" id="P46531"/>
<dbReference type="TreeFam" id="TF351641"/>
<dbReference type="PathwayCommons" id="P46531"/>
<dbReference type="Reactome" id="R-HSA-1912399">
    <property type="pathway name" value="Pre-NOTCH Processing in the Endoplasmic Reticulum"/>
</dbReference>
<dbReference type="Reactome" id="R-HSA-1912408">
    <property type="pathway name" value="Pre-NOTCH Transcription and Translation"/>
</dbReference>
<dbReference type="Reactome" id="R-HSA-1912420">
    <property type="pathway name" value="Pre-NOTCH Processing in Golgi"/>
</dbReference>
<dbReference type="Reactome" id="R-HSA-210744">
    <property type="pathway name" value="Regulation of gene expression in late stage (branching morphogenesis) pancreatic bud precursor cells"/>
</dbReference>
<dbReference type="Reactome" id="R-HSA-2122947">
    <property type="pathway name" value="NOTCH1 Intracellular Domain Regulates Transcription"/>
</dbReference>
<dbReference type="Reactome" id="R-HSA-2122948">
    <property type="pathway name" value="Activated NOTCH1 Transmits Signal to the Nucleus"/>
</dbReference>
<dbReference type="Reactome" id="R-HSA-2644606">
    <property type="pathway name" value="Constitutive Signaling by NOTCH1 PEST Domain Mutants"/>
</dbReference>
<dbReference type="Reactome" id="R-HSA-2644607">
    <property type="pathway name" value="Loss of Function of FBXW7 in Cancer and NOTCH1 Signaling"/>
</dbReference>
<dbReference type="Reactome" id="R-HSA-2660826">
    <property type="pathway name" value="Constitutive Signaling by NOTCH1 t(7;9)(NOTCH1:M1580_K2555) Translocation Mutant"/>
</dbReference>
<dbReference type="Reactome" id="R-HSA-2691232">
    <property type="pathway name" value="Constitutive Signaling by NOTCH1 HD Domain Mutants"/>
</dbReference>
<dbReference type="Reactome" id="R-HSA-2894862">
    <property type="pathway name" value="Constitutive Signaling by NOTCH1 HD+PEST Domain Mutants"/>
</dbReference>
<dbReference type="Reactome" id="R-HSA-350054">
    <property type="pathway name" value="Notch-HLH transcription pathway"/>
</dbReference>
<dbReference type="Reactome" id="R-HSA-5083630">
    <property type="pathway name" value="Defective LFNG causes SCDO3"/>
</dbReference>
<dbReference type="Reactome" id="R-HSA-8941856">
    <property type="pathway name" value="RUNX3 regulates NOTCH signaling"/>
</dbReference>
<dbReference type="Reactome" id="R-HSA-9013508">
    <property type="pathway name" value="NOTCH3 Intracellular Domain Regulates Transcription"/>
</dbReference>
<dbReference type="Reactome" id="R-HSA-9013695">
    <property type="pathway name" value="NOTCH4 Intracellular Domain Regulates Transcription"/>
</dbReference>
<dbReference type="Reactome" id="R-HSA-9793380">
    <property type="pathway name" value="Formation of paraxial mesoderm"/>
</dbReference>
<dbReference type="Reactome" id="R-HSA-9818030">
    <property type="pathway name" value="NFE2L2 regulating tumorigenic genes"/>
</dbReference>
<dbReference type="Reactome" id="R-HSA-9818749">
    <property type="pathway name" value="Regulation of NFE2L2 gene expression"/>
</dbReference>
<dbReference type="Reactome" id="R-HSA-9824272">
    <property type="pathway name" value="Somitogenesis"/>
</dbReference>
<dbReference type="SignaLink" id="P46531"/>
<dbReference type="SIGNOR" id="P46531"/>
<dbReference type="BioGRID-ORCS" id="4851">
    <property type="hits" value="23 hits in 1178 CRISPR screens"/>
</dbReference>
<dbReference type="ChiTaRS" id="NOTCH1">
    <property type="organism name" value="human"/>
</dbReference>
<dbReference type="EvolutionaryTrace" id="P46531"/>
<dbReference type="GeneWiki" id="Notch-1"/>
<dbReference type="GenomeRNAi" id="4851"/>
<dbReference type="Pharos" id="P46531">
    <property type="development level" value="Tchem"/>
</dbReference>
<dbReference type="PRO" id="PR:P46531"/>
<dbReference type="Proteomes" id="UP000005640">
    <property type="component" value="Chromosome 9"/>
</dbReference>
<dbReference type="RNAct" id="P46531">
    <property type="molecule type" value="protein"/>
</dbReference>
<dbReference type="Bgee" id="ENSG00000148400">
    <property type="expression patterns" value="Expressed in ventricular zone and 196 other cell types or tissues"/>
</dbReference>
<dbReference type="GO" id="GO:0001669">
    <property type="term" value="C:acrosomal vesicle"/>
    <property type="evidence" value="ECO:0007669"/>
    <property type="project" value="Ensembl"/>
</dbReference>
<dbReference type="GO" id="GO:0005912">
    <property type="term" value="C:adherens junction"/>
    <property type="evidence" value="ECO:0000250"/>
    <property type="project" value="UniProtKB"/>
</dbReference>
<dbReference type="GO" id="GO:0016324">
    <property type="term" value="C:apical plasma membrane"/>
    <property type="evidence" value="ECO:0000250"/>
    <property type="project" value="UniProtKB"/>
</dbReference>
<dbReference type="GO" id="GO:0009986">
    <property type="term" value="C:cell surface"/>
    <property type="evidence" value="ECO:0000318"/>
    <property type="project" value="GO_Central"/>
</dbReference>
<dbReference type="GO" id="GO:0005829">
    <property type="term" value="C:cytosol"/>
    <property type="evidence" value="ECO:0000304"/>
    <property type="project" value="Reactome"/>
</dbReference>
<dbReference type="GO" id="GO:0005789">
    <property type="term" value="C:endoplasmic reticulum membrane"/>
    <property type="evidence" value="ECO:0000304"/>
    <property type="project" value="Reactome"/>
</dbReference>
<dbReference type="GO" id="GO:0010008">
    <property type="term" value="C:endosome membrane"/>
    <property type="evidence" value="ECO:0000304"/>
    <property type="project" value="Reactome"/>
</dbReference>
<dbReference type="GO" id="GO:0005576">
    <property type="term" value="C:extracellular region"/>
    <property type="evidence" value="ECO:0000304"/>
    <property type="project" value="Reactome"/>
</dbReference>
<dbReference type="GO" id="GO:0098978">
    <property type="term" value="C:glutamatergic synapse"/>
    <property type="evidence" value="ECO:0007669"/>
    <property type="project" value="Ensembl"/>
</dbReference>
<dbReference type="GO" id="GO:0000139">
    <property type="term" value="C:Golgi membrane"/>
    <property type="evidence" value="ECO:0000304"/>
    <property type="project" value="Reactome"/>
</dbReference>
<dbReference type="GO" id="GO:0031902">
    <property type="term" value="C:late endosome membrane"/>
    <property type="evidence" value="ECO:0007669"/>
    <property type="project" value="UniProtKB-SubCell"/>
</dbReference>
<dbReference type="GO" id="GO:0002193">
    <property type="term" value="C:MAML1-RBP-Jkappa- ICN1 complex"/>
    <property type="evidence" value="ECO:0000314"/>
    <property type="project" value="UniProtKB"/>
</dbReference>
<dbReference type="GO" id="GO:0005654">
    <property type="term" value="C:nucleoplasm"/>
    <property type="evidence" value="ECO:0000304"/>
    <property type="project" value="Reactome"/>
</dbReference>
<dbReference type="GO" id="GO:0005634">
    <property type="term" value="C:nucleus"/>
    <property type="evidence" value="ECO:0000250"/>
    <property type="project" value="UniProtKB"/>
</dbReference>
<dbReference type="GO" id="GO:0005886">
    <property type="term" value="C:plasma membrane"/>
    <property type="evidence" value="ECO:0000250"/>
    <property type="project" value="BHF-UCL"/>
</dbReference>
<dbReference type="GO" id="GO:0098839">
    <property type="term" value="C:postsynaptic density membrane"/>
    <property type="evidence" value="ECO:0007669"/>
    <property type="project" value="Ensembl"/>
</dbReference>
<dbReference type="GO" id="GO:0043235">
    <property type="term" value="C:receptor complex"/>
    <property type="evidence" value="ECO:0000314"/>
    <property type="project" value="MGI"/>
</dbReference>
<dbReference type="GO" id="GO:0098685">
    <property type="term" value="C:Schaffer collateral - CA1 synapse"/>
    <property type="evidence" value="ECO:0007669"/>
    <property type="project" value="Ensembl"/>
</dbReference>
<dbReference type="GO" id="GO:0005509">
    <property type="term" value="F:calcium ion binding"/>
    <property type="evidence" value="ECO:0007669"/>
    <property type="project" value="InterPro"/>
</dbReference>
<dbReference type="GO" id="GO:0031490">
    <property type="term" value="F:chromatin DNA binding"/>
    <property type="evidence" value="ECO:0007669"/>
    <property type="project" value="Ensembl"/>
</dbReference>
<dbReference type="GO" id="GO:0000987">
    <property type="term" value="F:cis-regulatory region sequence-specific DNA binding"/>
    <property type="evidence" value="ECO:0000314"/>
    <property type="project" value="BHF-UCL"/>
</dbReference>
<dbReference type="GO" id="GO:0001228">
    <property type="term" value="F:DNA-binding transcription activator activity, RNA polymerase II-specific"/>
    <property type="evidence" value="ECO:0000314"/>
    <property type="project" value="BHF-UCL"/>
</dbReference>
<dbReference type="GO" id="GO:0019899">
    <property type="term" value="F:enzyme binding"/>
    <property type="evidence" value="ECO:0000250"/>
    <property type="project" value="UniProtKB"/>
</dbReference>
<dbReference type="GO" id="GO:0004857">
    <property type="term" value="F:enzyme inhibitor activity"/>
    <property type="evidence" value="ECO:0000250"/>
    <property type="project" value="UniProtKB"/>
</dbReference>
<dbReference type="GO" id="GO:0042802">
    <property type="term" value="F:identical protein binding"/>
    <property type="evidence" value="ECO:0000353"/>
    <property type="project" value="IntAct"/>
</dbReference>
<dbReference type="GO" id="GO:0005112">
    <property type="term" value="F:Notch binding"/>
    <property type="evidence" value="ECO:0007669"/>
    <property type="project" value="Ensembl"/>
</dbReference>
<dbReference type="GO" id="GO:0003713">
    <property type="term" value="F:transcription coactivator activity"/>
    <property type="evidence" value="ECO:0000314"/>
    <property type="project" value="BHF-UCL"/>
</dbReference>
<dbReference type="GO" id="GO:0140537">
    <property type="term" value="F:transcription regulator activator activity"/>
    <property type="evidence" value="ECO:0007669"/>
    <property type="project" value="Ensembl"/>
</dbReference>
<dbReference type="GO" id="GO:0004888">
    <property type="term" value="F:transmembrane signaling receptor activity"/>
    <property type="evidence" value="ECO:0000314"/>
    <property type="project" value="BHF-UCL"/>
</dbReference>
<dbReference type="GO" id="GO:0031100">
    <property type="term" value="P:animal organ regeneration"/>
    <property type="evidence" value="ECO:0007669"/>
    <property type="project" value="Ensembl"/>
</dbReference>
<dbReference type="GO" id="GO:0003180">
    <property type="term" value="P:aortic valve morphogenesis"/>
    <property type="evidence" value="ECO:0000315"/>
    <property type="project" value="BHF-UCL"/>
</dbReference>
<dbReference type="GO" id="GO:1902263">
    <property type="term" value="P:apoptotic process involved in embryonic digit morphogenesis"/>
    <property type="evidence" value="ECO:0007669"/>
    <property type="project" value="Ensembl"/>
</dbReference>
<dbReference type="GO" id="GO:0060842">
    <property type="term" value="P:arterial endothelial cell differentiation"/>
    <property type="evidence" value="ECO:0000250"/>
    <property type="project" value="BHF-UCL"/>
</dbReference>
<dbReference type="GO" id="GO:0048708">
    <property type="term" value="P:astrocyte differentiation"/>
    <property type="evidence" value="ECO:0007669"/>
    <property type="project" value="Ensembl"/>
</dbReference>
<dbReference type="GO" id="GO:0003162">
    <property type="term" value="P:atrioventricular node development"/>
    <property type="evidence" value="ECO:0007669"/>
    <property type="project" value="Ensembl"/>
</dbReference>
<dbReference type="GO" id="GO:0003181">
    <property type="term" value="P:atrioventricular valve morphogenesis"/>
    <property type="evidence" value="ECO:0000250"/>
    <property type="project" value="BHF-UCL"/>
</dbReference>
<dbReference type="GO" id="GO:0009912">
    <property type="term" value="P:auditory receptor cell fate commitment"/>
    <property type="evidence" value="ECO:0007669"/>
    <property type="project" value="Ensembl"/>
</dbReference>
<dbReference type="GO" id="GO:0007409">
    <property type="term" value="P:axonogenesis"/>
    <property type="evidence" value="ECO:0007669"/>
    <property type="project" value="Ensembl"/>
</dbReference>
<dbReference type="GO" id="GO:0048754">
    <property type="term" value="P:branching morphogenesis of an epithelial tube"/>
    <property type="evidence" value="ECO:0007669"/>
    <property type="project" value="Ensembl"/>
</dbReference>
<dbReference type="GO" id="GO:0017156">
    <property type="term" value="P:calcium-ion regulated exocytosis"/>
    <property type="evidence" value="ECO:0007669"/>
    <property type="project" value="Ensembl"/>
</dbReference>
<dbReference type="GO" id="GO:0003209">
    <property type="term" value="P:cardiac atrium morphogenesis"/>
    <property type="evidence" value="ECO:0000250"/>
    <property type="project" value="BHF-UCL"/>
</dbReference>
<dbReference type="GO" id="GO:0003207">
    <property type="term" value="P:cardiac chamber formation"/>
    <property type="evidence" value="ECO:0000250"/>
    <property type="project" value="BHF-UCL"/>
</dbReference>
<dbReference type="GO" id="GO:0060317">
    <property type="term" value="P:cardiac epithelial to mesenchymal transition"/>
    <property type="evidence" value="ECO:0000250"/>
    <property type="project" value="BHF-UCL"/>
</dbReference>
<dbReference type="GO" id="GO:0003214">
    <property type="term" value="P:cardiac left ventricle morphogenesis"/>
    <property type="evidence" value="ECO:0000250"/>
    <property type="project" value="BHF-UCL"/>
</dbReference>
<dbReference type="GO" id="GO:0060379">
    <property type="term" value="P:cardiac muscle cell myoblast differentiation"/>
    <property type="evidence" value="ECO:0000250"/>
    <property type="project" value="BHF-UCL"/>
</dbReference>
<dbReference type="GO" id="GO:0060038">
    <property type="term" value="P:cardiac muscle cell proliferation"/>
    <property type="evidence" value="ECO:0007669"/>
    <property type="project" value="Ensembl"/>
</dbReference>
<dbReference type="GO" id="GO:0055008">
    <property type="term" value="P:cardiac muscle tissue morphogenesis"/>
    <property type="evidence" value="ECO:0000250"/>
    <property type="project" value="BHF-UCL"/>
</dbReference>
<dbReference type="GO" id="GO:0003213">
    <property type="term" value="P:cardiac right atrium morphogenesis"/>
    <property type="evidence" value="ECO:0000250"/>
    <property type="project" value="BHF-UCL"/>
</dbReference>
<dbReference type="GO" id="GO:0003219">
    <property type="term" value="P:cardiac right ventricle formation"/>
    <property type="evidence" value="ECO:0007669"/>
    <property type="project" value="Ensembl"/>
</dbReference>
<dbReference type="GO" id="GO:0060411">
    <property type="term" value="P:cardiac septum morphogenesis"/>
    <property type="evidence" value="ECO:0000250"/>
    <property type="project" value="BHF-UCL"/>
</dbReference>
<dbReference type="GO" id="GO:0060948">
    <property type="term" value="P:cardiac vascular smooth muscle cell development"/>
    <property type="evidence" value="ECO:0000250"/>
    <property type="project" value="BHF-UCL"/>
</dbReference>
<dbReference type="GO" id="GO:0003208">
    <property type="term" value="P:cardiac ventricle morphogenesis"/>
    <property type="evidence" value="ECO:0000250"/>
    <property type="project" value="BHF-UCL"/>
</dbReference>
<dbReference type="GO" id="GO:0021515">
    <property type="term" value="P:cell differentiation in spinal cord"/>
    <property type="evidence" value="ECO:0007669"/>
    <property type="project" value="Ensembl"/>
</dbReference>
<dbReference type="GO" id="GO:0003273">
    <property type="term" value="P:cell migration involved in endocardial cushion formation"/>
    <property type="evidence" value="ECO:0000250"/>
    <property type="project" value="BHF-UCL"/>
</dbReference>
<dbReference type="GO" id="GO:0071372">
    <property type="term" value="P:cellular response to follicle-stimulating hormone stimulus"/>
    <property type="evidence" value="ECO:0000314"/>
    <property type="project" value="BHF-UCL"/>
</dbReference>
<dbReference type="GO" id="GO:0071456">
    <property type="term" value="P:cellular response to hypoxia"/>
    <property type="evidence" value="ECO:0000250"/>
    <property type="project" value="UniProtKB"/>
</dbReference>
<dbReference type="GO" id="GO:0071228">
    <property type="term" value="P:cellular response to tumor cell"/>
    <property type="evidence" value="ECO:0000314"/>
    <property type="project" value="UniProtKB"/>
</dbReference>
<dbReference type="GO" id="GO:0035924">
    <property type="term" value="P:cellular response to vascular endothelial growth factor stimulus"/>
    <property type="evidence" value="ECO:0000314"/>
    <property type="project" value="UniProtKB"/>
</dbReference>
<dbReference type="GO" id="GO:0021953">
    <property type="term" value="P:central nervous system neuron differentiation"/>
    <property type="evidence" value="ECO:0007669"/>
    <property type="project" value="Ensembl"/>
</dbReference>
<dbReference type="GO" id="GO:0099565">
    <property type="term" value="P:chemical synaptic transmission, postsynaptic"/>
    <property type="evidence" value="ECO:0007669"/>
    <property type="project" value="Ensembl"/>
</dbReference>
<dbReference type="GO" id="GO:0060271">
    <property type="term" value="P:cilium assembly"/>
    <property type="evidence" value="ECO:0000250"/>
    <property type="project" value="UniProtKB"/>
</dbReference>
<dbReference type="GO" id="GO:0072044">
    <property type="term" value="P:collecting duct development"/>
    <property type="evidence" value="ECO:0007669"/>
    <property type="project" value="Ensembl"/>
</dbReference>
<dbReference type="GO" id="GO:0007386">
    <property type="term" value="P:compartment pattern specification"/>
    <property type="evidence" value="ECO:0007669"/>
    <property type="project" value="Ensembl"/>
</dbReference>
<dbReference type="GO" id="GO:0060982">
    <property type="term" value="P:coronary artery morphogenesis"/>
    <property type="evidence" value="ECO:0000250"/>
    <property type="project" value="BHF-UCL"/>
</dbReference>
<dbReference type="GO" id="GO:0003182">
    <property type="term" value="P:coronary sinus valve morphogenesis"/>
    <property type="evidence" value="ECO:0007669"/>
    <property type="project" value="Ensembl"/>
</dbReference>
<dbReference type="GO" id="GO:0003169">
    <property type="term" value="P:coronary vein morphogenesis"/>
    <property type="evidence" value="ECO:0000250"/>
    <property type="project" value="BHF-UCL"/>
</dbReference>
<dbReference type="GO" id="GO:0007368">
    <property type="term" value="P:determination of left/right symmetry"/>
    <property type="evidence" value="ECO:0000250"/>
    <property type="project" value="BHF-UCL"/>
</dbReference>
<dbReference type="GO" id="GO:0072017">
    <property type="term" value="P:distal tubule development"/>
    <property type="evidence" value="ECO:0007669"/>
    <property type="project" value="Ensembl"/>
</dbReference>
<dbReference type="GO" id="GO:0035116">
    <property type="term" value="P:embryonic hindlimb morphogenesis"/>
    <property type="evidence" value="ECO:0007669"/>
    <property type="project" value="Ensembl"/>
</dbReference>
<dbReference type="GO" id="GO:0060956">
    <property type="term" value="P:endocardial cell differentiation"/>
    <property type="evidence" value="ECO:0000250"/>
    <property type="project" value="BHF-UCL"/>
</dbReference>
<dbReference type="GO" id="GO:0003203">
    <property type="term" value="P:endocardial cushion morphogenesis"/>
    <property type="evidence" value="ECO:0000250"/>
    <property type="project" value="BHF-UCL"/>
</dbReference>
<dbReference type="GO" id="GO:0003157">
    <property type="term" value="P:endocardium development"/>
    <property type="evidence" value="ECO:0000250"/>
    <property type="project" value="BHF-UCL"/>
</dbReference>
<dbReference type="GO" id="GO:0003160">
    <property type="term" value="P:endocardium morphogenesis"/>
    <property type="evidence" value="ECO:0000250"/>
    <property type="project" value="BHF-UCL"/>
</dbReference>
<dbReference type="GO" id="GO:0007492">
    <property type="term" value="P:endoderm development"/>
    <property type="evidence" value="ECO:0007669"/>
    <property type="project" value="Ensembl"/>
</dbReference>
<dbReference type="GO" id="GO:0009957">
    <property type="term" value="P:epidermal cell fate specification"/>
    <property type="evidence" value="ECO:0007669"/>
    <property type="project" value="Ensembl"/>
</dbReference>
<dbReference type="GO" id="GO:0072148">
    <property type="term" value="P:epithelial cell fate commitment"/>
    <property type="evidence" value="ECO:0007669"/>
    <property type="project" value="Ensembl"/>
</dbReference>
<dbReference type="GO" id="GO:0050673">
    <property type="term" value="P:epithelial cell proliferation"/>
    <property type="evidence" value="ECO:0007669"/>
    <property type="project" value="Ensembl"/>
</dbReference>
<dbReference type="GO" id="GO:0001837">
    <property type="term" value="P:epithelial to mesenchymal transition"/>
    <property type="evidence" value="ECO:0000315"/>
    <property type="project" value="BHF-UCL"/>
</dbReference>
<dbReference type="GO" id="GO:0003198">
    <property type="term" value="P:epithelial to mesenchymal transition involved in endocardial cushion formation"/>
    <property type="evidence" value="ECO:0000250"/>
    <property type="project" value="BHF-UCL"/>
</dbReference>
<dbReference type="GO" id="GO:0030900">
    <property type="term" value="P:forebrain development"/>
    <property type="evidence" value="ECO:0007669"/>
    <property type="project" value="Ensembl"/>
</dbReference>
<dbReference type="GO" id="GO:0007440">
    <property type="term" value="P:foregut morphogenesis"/>
    <property type="evidence" value="ECO:0007669"/>
    <property type="project" value="Ensembl"/>
</dbReference>
<dbReference type="GO" id="GO:0072144">
    <property type="term" value="P:glomerular mesangial cell development"/>
    <property type="evidence" value="ECO:0007669"/>
    <property type="project" value="Ensembl"/>
</dbReference>
<dbReference type="GO" id="GO:0003241">
    <property type="term" value="P:growth involved in heart morphogenesis"/>
    <property type="evidence" value="ECO:0000250"/>
    <property type="project" value="BHF-UCL"/>
</dbReference>
<dbReference type="GO" id="GO:0031069">
    <property type="term" value="P:hair follicle morphogenesis"/>
    <property type="evidence" value="ECO:0007669"/>
    <property type="project" value="Ensembl"/>
</dbReference>
<dbReference type="GO" id="GO:0007507">
    <property type="term" value="P:heart development"/>
    <property type="evidence" value="ECO:0000315"/>
    <property type="project" value="DFLAT"/>
</dbReference>
<dbReference type="GO" id="GO:0001947">
    <property type="term" value="P:heart looping"/>
    <property type="evidence" value="ECO:0000250"/>
    <property type="project" value="BHF-UCL"/>
</dbReference>
<dbReference type="GO" id="GO:0061384">
    <property type="term" value="P:heart trabecula morphogenesis"/>
    <property type="evidence" value="ECO:0000250"/>
    <property type="project" value="BHF-UCL"/>
</dbReference>
<dbReference type="GO" id="GO:0048873">
    <property type="term" value="P:homeostasis of number of cells within a tissue"/>
    <property type="evidence" value="ECO:0000250"/>
    <property type="project" value="BHF-UCL"/>
</dbReference>
<dbReference type="GO" id="GO:0006959">
    <property type="term" value="P:humoral immune response"/>
    <property type="evidence" value="ECO:0007669"/>
    <property type="project" value="Ensembl"/>
</dbReference>
<dbReference type="GO" id="GO:0006955">
    <property type="term" value="P:immune response"/>
    <property type="evidence" value="ECO:0000303"/>
    <property type="project" value="UniProtKB"/>
</dbReference>
<dbReference type="GO" id="GO:0001701">
    <property type="term" value="P:in utero embryonic development"/>
    <property type="evidence" value="ECO:0007669"/>
    <property type="project" value="Ensembl"/>
</dbReference>
<dbReference type="GO" id="GO:0002437">
    <property type="term" value="P:inflammatory response to antigenic stimulus"/>
    <property type="evidence" value="ECO:0007669"/>
    <property type="project" value="Ensembl"/>
</dbReference>
<dbReference type="GO" id="GO:0002085">
    <property type="term" value="P:inhibition of neuroepithelial cell differentiation"/>
    <property type="evidence" value="ECO:0007669"/>
    <property type="project" value="Ensembl"/>
</dbReference>
<dbReference type="GO" id="GO:0097400">
    <property type="term" value="P:interleukin-17-mediated signaling pathway"/>
    <property type="evidence" value="ECO:0007669"/>
    <property type="project" value="Ensembl"/>
</dbReference>
<dbReference type="GO" id="GO:0030216">
    <property type="term" value="P:keratinocyte differentiation"/>
    <property type="evidence" value="ECO:0007669"/>
    <property type="project" value="Ensembl"/>
</dbReference>
<dbReference type="GO" id="GO:0070986">
    <property type="term" value="P:left/right axis specification"/>
    <property type="evidence" value="ECO:0007669"/>
    <property type="project" value="Ensembl"/>
</dbReference>
<dbReference type="GO" id="GO:0001889">
    <property type="term" value="P:liver development"/>
    <property type="evidence" value="ECO:0007669"/>
    <property type="project" value="Ensembl"/>
</dbReference>
<dbReference type="GO" id="GO:0030324">
    <property type="term" value="P:lung development"/>
    <property type="evidence" value="ECO:0007669"/>
    <property type="project" value="Ensembl"/>
</dbReference>
<dbReference type="GO" id="GO:0001554">
    <property type="term" value="P:luteolysis"/>
    <property type="evidence" value="ECO:0007669"/>
    <property type="project" value="Ensembl"/>
</dbReference>
<dbReference type="GO" id="GO:0014031">
    <property type="term" value="P:mesenchymal cell development"/>
    <property type="evidence" value="ECO:0000250"/>
    <property type="project" value="BHF-UCL"/>
</dbReference>
<dbReference type="GO" id="GO:0003192">
    <property type="term" value="P:mitral valve formation"/>
    <property type="evidence" value="ECO:0000315"/>
    <property type="project" value="BHF-UCL"/>
</dbReference>
<dbReference type="GO" id="GO:2000811">
    <property type="term" value="P:negative regulation of anoikis"/>
    <property type="evidence" value="ECO:0000315"/>
    <property type="project" value="BHF-UCL"/>
</dbReference>
<dbReference type="GO" id="GO:0070168">
    <property type="term" value="P:negative regulation of biomineral tissue development"/>
    <property type="evidence" value="ECO:0000250"/>
    <property type="project" value="BHF-UCL"/>
</dbReference>
<dbReference type="GO" id="GO:0030514">
    <property type="term" value="P:negative regulation of BMP signaling pathway"/>
    <property type="evidence" value="ECO:0000250"/>
    <property type="project" value="BHF-UCL"/>
</dbReference>
<dbReference type="GO" id="GO:0045955">
    <property type="term" value="P:negative regulation of calcium ion-dependent exocytosis"/>
    <property type="evidence" value="ECO:0007669"/>
    <property type="project" value="Ensembl"/>
</dbReference>
<dbReference type="GO" id="GO:0090090">
    <property type="term" value="P:negative regulation of canonical Wnt signaling pathway"/>
    <property type="evidence" value="ECO:0007669"/>
    <property type="project" value="Ensembl"/>
</dbReference>
<dbReference type="GO" id="GO:0010667">
    <property type="term" value="P:negative regulation of cardiac muscle cell apoptotic process"/>
    <property type="evidence" value="ECO:0007669"/>
    <property type="project" value="Ensembl"/>
</dbReference>
<dbReference type="GO" id="GO:0010614">
    <property type="term" value="P:negative regulation of cardiac muscle hypertrophy"/>
    <property type="evidence" value="ECO:0000250"/>
    <property type="project" value="BHF-UCL"/>
</dbReference>
<dbReference type="GO" id="GO:0043086">
    <property type="term" value="P:negative regulation of catalytic activity"/>
    <property type="evidence" value="ECO:0000250"/>
    <property type="project" value="UniProtKB"/>
</dbReference>
<dbReference type="GO" id="GO:0060354">
    <property type="term" value="P:negative regulation of cell adhesion molecule production"/>
    <property type="evidence" value="ECO:0000315"/>
    <property type="project" value="ARUK-UCL"/>
</dbReference>
<dbReference type="GO" id="GO:0090051">
    <property type="term" value="P:negative regulation of cell migration involved in sprouting angiogenesis"/>
    <property type="evidence" value="ECO:0000314"/>
    <property type="project" value="UniProtKB"/>
</dbReference>
<dbReference type="GO" id="GO:0008285">
    <property type="term" value="P:negative regulation of cell population proliferation"/>
    <property type="evidence" value="ECO:0000314"/>
    <property type="project" value="UniProtKB"/>
</dbReference>
<dbReference type="GO" id="GO:0003252">
    <property type="term" value="P:negative regulation of cell proliferation involved in heart valve morphogenesis"/>
    <property type="evidence" value="ECO:0000250"/>
    <property type="project" value="BHF-UCL"/>
</dbReference>
<dbReference type="GO" id="GO:2000048">
    <property type="term" value="P:negative regulation of cell-cell adhesion mediated by cadherin"/>
    <property type="evidence" value="ECO:0000315"/>
    <property type="project" value="ARUK-UCL"/>
</dbReference>
<dbReference type="GO" id="GO:0010812">
    <property type="term" value="P:negative regulation of cell-substrate adhesion"/>
    <property type="evidence" value="ECO:0000314"/>
    <property type="project" value="BHF-UCL"/>
</dbReference>
<dbReference type="GO" id="GO:0120163">
    <property type="term" value="P:negative regulation of cold-induced thermogenesis"/>
    <property type="evidence" value="ECO:0000250"/>
    <property type="project" value="YuBioLab"/>
</dbReference>
<dbReference type="GO" id="GO:0032966">
    <property type="term" value="P:negative regulation of collagen biosynthetic process"/>
    <property type="evidence" value="ECO:0007669"/>
    <property type="project" value="Ensembl"/>
</dbReference>
<dbReference type="GO" id="GO:0045892">
    <property type="term" value="P:negative regulation of DNA-templated transcription"/>
    <property type="evidence" value="ECO:0000250"/>
    <property type="project" value="BHF-UCL"/>
</dbReference>
<dbReference type="GO" id="GO:2001027">
    <property type="term" value="P:negative regulation of endothelial cell chemotaxis"/>
    <property type="evidence" value="ECO:0000314"/>
    <property type="project" value="UniProtKB"/>
</dbReference>
<dbReference type="GO" id="GO:0050680">
    <property type="term" value="P:negative regulation of epithelial cell proliferation"/>
    <property type="evidence" value="ECO:0007669"/>
    <property type="project" value="Ensembl"/>
</dbReference>
<dbReference type="GO" id="GO:0003332">
    <property type="term" value="P:negative regulation of extracellular matrix constituent secretion"/>
    <property type="evidence" value="ECO:0000250"/>
    <property type="project" value="BHF-UCL"/>
</dbReference>
<dbReference type="GO" id="GO:0010629">
    <property type="term" value="P:negative regulation of gene expression"/>
    <property type="evidence" value="ECO:0000314"/>
    <property type="project" value="UniProtKB"/>
</dbReference>
<dbReference type="GO" id="GO:0060253">
    <property type="term" value="P:negative regulation of glial cell proliferation"/>
    <property type="evidence" value="ECO:0000250"/>
    <property type="project" value="UniProtKB"/>
</dbReference>
<dbReference type="GO" id="GO:0045608">
    <property type="term" value="P:negative regulation of inner ear auditory receptor cell differentiation"/>
    <property type="evidence" value="ECO:0007669"/>
    <property type="project" value="Ensembl"/>
</dbReference>
<dbReference type="GO" id="GO:0045662">
    <property type="term" value="P:negative regulation of myoblast differentiation"/>
    <property type="evidence" value="ECO:0000315"/>
    <property type="project" value="UniProtKB"/>
</dbReference>
<dbReference type="GO" id="GO:0010832">
    <property type="term" value="P:negative regulation of myotube differentiation"/>
    <property type="evidence" value="ECO:0007669"/>
    <property type="project" value="Ensembl"/>
</dbReference>
<dbReference type="GO" id="GO:0050768">
    <property type="term" value="P:negative regulation of neurogenesis"/>
    <property type="evidence" value="ECO:0000250"/>
    <property type="project" value="UniProtKB"/>
</dbReference>
<dbReference type="GO" id="GO:0048715">
    <property type="term" value="P:negative regulation of oligodendrocyte differentiation"/>
    <property type="evidence" value="ECO:0000250"/>
    <property type="project" value="UniProtKB"/>
</dbReference>
<dbReference type="GO" id="GO:0030279">
    <property type="term" value="P:negative regulation of ossification"/>
    <property type="evidence" value="ECO:0000250"/>
    <property type="project" value="BHF-UCL"/>
</dbReference>
<dbReference type="GO" id="GO:0045668">
    <property type="term" value="P:negative regulation of osteoblast differentiation"/>
    <property type="evidence" value="ECO:0000250"/>
    <property type="project" value="BHF-UCL"/>
</dbReference>
<dbReference type="GO" id="GO:0046533">
    <property type="term" value="P:negative regulation of photoreceptor cell differentiation"/>
    <property type="evidence" value="ECO:0007669"/>
    <property type="project" value="Ensembl"/>
</dbReference>
<dbReference type="GO" id="GO:2000974">
    <property type="term" value="P:negative regulation of pro-B cell differentiation"/>
    <property type="evidence" value="ECO:0000250"/>
    <property type="project" value="UniProtKB"/>
</dbReference>
<dbReference type="GO" id="GO:2000737">
    <property type="term" value="P:negative regulation of stem cell differentiation"/>
    <property type="evidence" value="ECO:0000315"/>
    <property type="project" value="UniProtKB"/>
</dbReference>
<dbReference type="GO" id="GO:0000122">
    <property type="term" value="P:negative regulation of transcription by RNA polymerase II"/>
    <property type="evidence" value="ECO:0000315"/>
    <property type="project" value="ARUK-UCL"/>
</dbReference>
<dbReference type="GO" id="GO:0021915">
    <property type="term" value="P:neural tube development"/>
    <property type="evidence" value="ECO:0007669"/>
    <property type="project" value="Ensembl"/>
</dbReference>
<dbReference type="GO" id="GO:0061101">
    <property type="term" value="P:neuroendocrine cell differentiation"/>
    <property type="evidence" value="ECO:0007669"/>
    <property type="project" value="Ensembl"/>
</dbReference>
<dbReference type="GO" id="GO:0097150">
    <property type="term" value="P:neuronal stem cell population maintenance"/>
    <property type="evidence" value="ECO:0000270"/>
    <property type="project" value="UniProtKB"/>
</dbReference>
<dbReference type="GO" id="GO:0007219">
    <property type="term" value="P:Notch signaling pathway"/>
    <property type="evidence" value="ECO:0000314"/>
    <property type="project" value="UniProtKB"/>
</dbReference>
<dbReference type="GO" id="GO:0003270">
    <property type="term" value="P:Notch signaling pathway involved in regulation of secondary heart field cardioblast proliferation"/>
    <property type="evidence" value="ECO:0007669"/>
    <property type="project" value="Ensembl"/>
</dbReference>
<dbReference type="GO" id="GO:0048709">
    <property type="term" value="P:oligodendrocyte differentiation"/>
    <property type="evidence" value="ECO:0007669"/>
    <property type="project" value="Ensembl"/>
</dbReference>
<dbReference type="GO" id="GO:0003151">
    <property type="term" value="P:outflow tract morphogenesis"/>
    <property type="evidence" value="ECO:0000315"/>
    <property type="project" value="BHF-UCL"/>
</dbReference>
<dbReference type="GO" id="GO:0003344">
    <property type="term" value="P:pericardium morphogenesis"/>
    <property type="evidence" value="ECO:0000250"/>
    <property type="project" value="BHF-UCL"/>
</dbReference>
<dbReference type="GO" id="GO:1903849">
    <property type="term" value="P:positive regulation of aorta morphogenesis"/>
    <property type="evidence" value="ECO:0007669"/>
    <property type="project" value="Ensembl"/>
</dbReference>
<dbReference type="GO" id="GO:1902339">
    <property type="term" value="P:positive regulation of apoptotic process involved in morphogenesis"/>
    <property type="evidence" value="ECO:0000250"/>
    <property type="project" value="BHF-UCL"/>
</dbReference>
<dbReference type="GO" id="GO:0048711">
    <property type="term" value="P:positive regulation of astrocyte differentiation"/>
    <property type="evidence" value="ECO:0000250"/>
    <property type="project" value="UniProtKB"/>
</dbReference>
<dbReference type="GO" id="GO:0030513">
    <property type="term" value="P:positive regulation of BMP signaling pathway"/>
    <property type="evidence" value="ECO:0000250"/>
    <property type="project" value="UniProtKB"/>
</dbReference>
<dbReference type="GO" id="GO:0062043">
    <property type="term" value="P:positive regulation of cardiac epithelial to mesenchymal transition"/>
    <property type="evidence" value="ECO:0000250"/>
    <property type="project" value="BHF-UCL"/>
</dbReference>
<dbReference type="GO" id="GO:0060045">
    <property type="term" value="P:positive regulation of cardiac muscle cell proliferation"/>
    <property type="evidence" value="ECO:0000250"/>
    <property type="project" value="BHF-UCL"/>
</dbReference>
<dbReference type="GO" id="GO:0030335">
    <property type="term" value="P:positive regulation of cell migration"/>
    <property type="evidence" value="ECO:0000250"/>
    <property type="project" value="BHF-UCL"/>
</dbReference>
<dbReference type="GO" id="GO:0008284">
    <property type="term" value="P:positive regulation of cell population proliferation"/>
    <property type="evidence" value="ECO:0000314"/>
    <property type="project" value="UniProtKB"/>
</dbReference>
<dbReference type="GO" id="GO:0045893">
    <property type="term" value="P:positive regulation of DNA-templated transcription"/>
    <property type="evidence" value="ECO:0000250"/>
    <property type="project" value="UniProtKB"/>
</dbReference>
<dbReference type="GO" id="GO:0045603">
    <property type="term" value="P:positive regulation of endothelial cell differentiation"/>
    <property type="evidence" value="ECO:0007669"/>
    <property type="project" value="Ensembl"/>
</dbReference>
<dbReference type="GO" id="GO:0050679">
    <property type="term" value="P:positive regulation of epithelial cell proliferation"/>
    <property type="evidence" value="ECO:0007669"/>
    <property type="project" value="Ensembl"/>
</dbReference>
<dbReference type="GO" id="GO:0070374">
    <property type="term" value="P:positive regulation of ERK1 and ERK2 cascade"/>
    <property type="evidence" value="ECO:0000314"/>
    <property type="project" value="UniProtKB"/>
</dbReference>
<dbReference type="GO" id="GO:0010628">
    <property type="term" value="P:positive regulation of gene expression"/>
    <property type="evidence" value="ECO:0000250"/>
    <property type="project" value="BHF-UCL"/>
</dbReference>
<dbReference type="GO" id="GO:0045618">
    <property type="term" value="P:positive regulation of keratinocyte differentiation"/>
    <property type="evidence" value="ECO:0007669"/>
    <property type="project" value="Ensembl"/>
</dbReference>
<dbReference type="GO" id="GO:0002052">
    <property type="term" value="P:positive regulation of neuroblast proliferation"/>
    <property type="evidence" value="ECO:0007669"/>
    <property type="project" value="Ensembl"/>
</dbReference>
<dbReference type="GO" id="GO:0045747">
    <property type="term" value="P:positive regulation of Notch signaling pathway"/>
    <property type="evidence" value="ECO:0007669"/>
    <property type="project" value="Ensembl"/>
</dbReference>
<dbReference type="GO" id="GO:0046579">
    <property type="term" value="P:positive regulation of Ras protein signal transduction"/>
    <property type="evidence" value="ECO:0000314"/>
    <property type="project" value="UniProtKB"/>
</dbReference>
<dbReference type="GO" id="GO:0046427">
    <property type="term" value="P:positive regulation of receptor signaling pathway via JAK-STAT"/>
    <property type="evidence" value="ECO:0000250"/>
    <property type="project" value="UniProtKB"/>
</dbReference>
<dbReference type="GO" id="GO:0051152">
    <property type="term" value="P:positive regulation of smooth muscle cell differentiation"/>
    <property type="evidence" value="ECO:0000314"/>
    <property type="project" value="BHF-UCL"/>
</dbReference>
<dbReference type="GO" id="GO:0045944">
    <property type="term" value="P:positive regulation of transcription by RNA polymerase II"/>
    <property type="evidence" value="ECO:0000314"/>
    <property type="project" value="UniProtKB"/>
</dbReference>
<dbReference type="GO" id="GO:0007221">
    <property type="term" value="P:positive regulation of transcription of Notch receptor target"/>
    <property type="evidence" value="ECO:0000250"/>
    <property type="project" value="BHF-UCL"/>
</dbReference>
<dbReference type="GO" id="GO:0045070">
    <property type="term" value="P:positive regulation of viral genome replication"/>
    <property type="evidence" value="ECO:0007669"/>
    <property type="project" value="Ensembl"/>
</dbReference>
<dbReference type="GO" id="GO:0060740">
    <property type="term" value="P:prostate gland epithelium morphogenesis"/>
    <property type="evidence" value="ECO:0007669"/>
    <property type="project" value="Ensembl"/>
</dbReference>
<dbReference type="GO" id="GO:0030163">
    <property type="term" value="P:protein catabolic process"/>
    <property type="evidence" value="ECO:0007669"/>
    <property type="project" value="Ensembl"/>
</dbReference>
<dbReference type="GO" id="GO:0006606">
    <property type="term" value="P:protein import into nucleus"/>
    <property type="evidence" value="ECO:0007669"/>
    <property type="project" value="Ensembl"/>
</dbReference>
<dbReference type="GO" id="GO:0003184">
    <property type="term" value="P:pulmonary valve morphogenesis"/>
    <property type="evidence" value="ECO:0000315"/>
    <property type="project" value="BHF-UCL"/>
</dbReference>
<dbReference type="GO" id="GO:0061344">
    <property type="term" value="P:regulation of cell adhesion involved in heart morphogenesis"/>
    <property type="evidence" value="ECO:0007669"/>
    <property type="project" value="Ensembl"/>
</dbReference>
<dbReference type="GO" id="GO:0006355">
    <property type="term" value="P:regulation of DNA-templated transcription"/>
    <property type="evidence" value="ECO:0000304"/>
    <property type="project" value="UniProtKB"/>
</dbReference>
<dbReference type="GO" id="GO:0060768">
    <property type="term" value="P:regulation of epithelial cell proliferation involved in prostate gland development"/>
    <property type="evidence" value="ECO:0007669"/>
    <property type="project" value="Ensembl"/>
</dbReference>
<dbReference type="GO" id="GO:1901201">
    <property type="term" value="P:regulation of extracellular matrix assembly"/>
    <property type="evidence" value="ECO:0000250"/>
    <property type="project" value="BHF-UCL"/>
</dbReference>
<dbReference type="GO" id="GO:0014807">
    <property type="term" value="P:regulation of somitogenesis"/>
    <property type="evidence" value="ECO:0007669"/>
    <property type="project" value="Ensembl"/>
</dbReference>
<dbReference type="GO" id="GO:0072091">
    <property type="term" value="P:regulation of stem cell proliferation"/>
    <property type="evidence" value="ECO:0007669"/>
    <property type="project" value="Ensembl"/>
</dbReference>
<dbReference type="GO" id="GO:0006357">
    <property type="term" value="P:regulation of transcription by RNA polymerase II"/>
    <property type="evidence" value="ECO:0000250"/>
    <property type="project" value="BHF-UCL"/>
</dbReference>
<dbReference type="GO" id="GO:0032496">
    <property type="term" value="P:response to lipopolysaccharide"/>
    <property type="evidence" value="ECO:0007669"/>
    <property type="project" value="Ensembl"/>
</dbReference>
<dbReference type="GO" id="GO:0032495">
    <property type="term" value="P:response to muramyl dipeptide"/>
    <property type="evidence" value="ECO:0007669"/>
    <property type="project" value="Ensembl"/>
</dbReference>
<dbReference type="GO" id="GO:0042670">
    <property type="term" value="P:retinal cone cell differentiation"/>
    <property type="evidence" value="ECO:0007669"/>
    <property type="project" value="Ensembl"/>
</dbReference>
<dbReference type="GO" id="GO:0060528">
    <property type="term" value="P:secretory columnal luminar epithelial cell differentiation involved in prostate glandular acinus development"/>
    <property type="evidence" value="ECO:0007669"/>
    <property type="project" value="Ensembl"/>
</dbReference>
<dbReference type="GO" id="GO:0035914">
    <property type="term" value="P:skeletal muscle cell differentiation"/>
    <property type="evidence" value="ECO:0007669"/>
    <property type="project" value="Ensembl"/>
</dbReference>
<dbReference type="GO" id="GO:0048103">
    <property type="term" value="P:somatic stem cell division"/>
    <property type="evidence" value="ECO:0007669"/>
    <property type="project" value="Ensembl"/>
</dbReference>
<dbReference type="GO" id="GO:0007283">
    <property type="term" value="P:spermatogenesis"/>
    <property type="evidence" value="ECO:0007669"/>
    <property type="project" value="Ensembl"/>
</dbReference>
<dbReference type="GO" id="GO:0002040">
    <property type="term" value="P:sprouting angiogenesis"/>
    <property type="evidence" value="ECO:0007669"/>
    <property type="project" value="Ensembl"/>
</dbReference>
<dbReference type="GO" id="GO:0072538">
    <property type="term" value="P:T-helper 17 type immune response"/>
    <property type="evidence" value="ECO:0007669"/>
    <property type="project" value="Ensembl"/>
</dbReference>
<dbReference type="GO" id="GO:0042246">
    <property type="term" value="P:tissue regeneration"/>
    <property type="evidence" value="ECO:0007669"/>
    <property type="project" value="Ensembl"/>
</dbReference>
<dbReference type="GO" id="GO:0006366">
    <property type="term" value="P:transcription by RNA polymerase II"/>
    <property type="evidence" value="ECO:0007669"/>
    <property type="project" value="Ensembl"/>
</dbReference>
<dbReference type="GO" id="GO:0035148">
    <property type="term" value="P:tube formation"/>
    <property type="evidence" value="ECO:0000315"/>
    <property type="project" value="UniProtKB"/>
</dbReference>
<dbReference type="GO" id="GO:0060979">
    <property type="term" value="P:vasculogenesis involved in coronary vascular morphogenesis"/>
    <property type="evidence" value="ECO:0000250"/>
    <property type="project" value="BHF-UCL"/>
</dbReference>
<dbReference type="GO" id="GO:0060843">
    <property type="term" value="P:venous endothelial cell differentiation"/>
    <property type="evidence" value="ECO:0000250"/>
    <property type="project" value="BHF-UCL"/>
</dbReference>
<dbReference type="GO" id="GO:0060412">
    <property type="term" value="P:ventricular septum morphogenesis"/>
    <property type="evidence" value="ECO:0000315"/>
    <property type="project" value="BHF-UCL"/>
</dbReference>
<dbReference type="GO" id="GO:0003222">
    <property type="term" value="P:ventricular trabecula myocardium morphogenesis"/>
    <property type="evidence" value="ECO:0000250"/>
    <property type="project" value="BHF-UCL"/>
</dbReference>
<dbReference type="CDD" id="cd00054">
    <property type="entry name" value="EGF_CA"/>
    <property type="match status" value="31"/>
</dbReference>
<dbReference type="CDD" id="cd21702">
    <property type="entry name" value="JMTM_Notch1"/>
    <property type="match status" value="1"/>
</dbReference>
<dbReference type="DisProt" id="DP01104"/>
<dbReference type="FunFam" id="2.10.25.10:FF:000123">
    <property type="entry name" value="Crumbs homolog 1 (Drosophila)"/>
    <property type="match status" value="1"/>
</dbReference>
<dbReference type="FunFam" id="2.10.25.10:FF:000151">
    <property type="entry name" value="FAT atypical cadherin 4"/>
    <property type="match status" value="1"/>
</dbReference>
<dbReference type="FunFam" id="1.25.40.20:FF:000005">
    <property type="entry name" value="Neurogenic locus notch 1"/>
    <property type="match status" value="1"/>
</dbReference>
<dbReference type="FunFam" id="2.10.25.10:FF:000004">
    <property type="entry name" value="Neurogenic locus notch 1"/>
    <property type="match status" value="8"/>
</dbReference>
<dbReference type="FunFam" id="2.10.25.10:FF:000080">
    <property type="entry name" value="Neurogenic locus notch 1"/>
    <property type="match status" value="2"/>
</dbReference>
<dbReference type="FunFam" id="2.10.25.10:FF:000136">
    <property type="entry name" value="Neurogenic locus notch 1"/>
    <property type="match status" value="1"/>
</dbReference>
<dbReference type="FunFam" id="2.10.25.10:FF:000279">
    <property type="entry name" value="Neurogenic locus notch 1"/>
    <property type="match status" value="1"/>
</dbReference>
<dbReference type="FunFam" id="3.30.300.320:FF:000001">
    <property type="entry name" value="Neurogenic locus notch 1"/>
    <property type="match status" value="1"/>
</dbReference>
<dbReference type="FunFam" id="3.30.70.3310:FF:000003">
    <property type="entry name" value="Neurogenic locus notch 1"/>
    <property type="match status" value="1"/>
</dbReference>
<dbReference type="FunFam" id="2.10.25.10:FF:000558">
    <property type="entry name" value="Neurogenic locus notch homolog protein 1"/>
    <property type="match status" value="1"/>
</dbReference>
<dbReference type="FunFam" id="2.10.25.10:FF:000688">
    <property type="entry name" value="Neurogenic locus notch homolog protein 1"/>
    <property type="match status" value="1"/>
</dbReference>
<dbReference type="FunFam" id="2.10.25.10:FF:000955">
    <property type="entry name" value="Neurogenic locus notch homolog protein 1"/>
    <property type="match status" value="1"/>
</dbReference>
<dbReference type="FunFam" id="2.10.25.10:FF:000031">
    <property type="entry name" value="neurogenic locus notch homolog protein 3"/>
    <property type="match status" value="1"/>
</dbReference>
<dbReference type="FunFam" id="2.10.25.10:FF:000060">
    <property type="entry name" value="Neurogenic locus notch protein 1"/>
    <property type="match status" value="2"/>
</dbReference>
<dbReference type="FunFam" id="2.10.25.10:FF:000092">
    <property type="entry name" value="Neurogenic locus notch protein 1"/>
    <property type="match status" value="1"/>
</dbReference>
<dbReference type="FunFam" id="2.10.25.10:FF:000127">
    <property type="entry name" value="Neurogenic locus notch protein 1"/>
    <property type="match status" value="3"/>
</dbReference>
<dbReference type="FunFam" id="2.10.25.10:FF:000157">
    <property type="entry name" value="Neurogenic locus notch protein 1"/>
    <property type="match status" value="1"/>
</dbReference>
<dbReference type="FunFam" id="2.10.25.10:FF:000253">
    <property type="entry name" value="Neurogenic locus notch protein 1"/>
    <property type="match status" value="1"/>
</dbReference>
<dbReference type="FunFam" id="2.10.25.10:FF:000521">
    <property type="entry name" value="Neurogenic locus notch protein 1"/>
    <property type="match status" value="1"/>
</dbReference>
<dbReference type="FunFam" id="2.10.25.10:FF:000524">
    <property type="entry name" value="Neurogenic locus notch protein 1"/>
    <property type="match status" value="1"/>
</dbReference>
<dbReference type="FunFam" id="2.10.25.10:FF:000125">
    <property type="entry name" value="Neurogenic locus notch protein-like"/>
    <property type="match status" value="1"/>
</dbReference>
<dbReference type="FunFam" id="2.10.25.10:FF:000095">
    <property type="entry name" value="Notch, isoform B"/>
    <property type="match status" value="1"/>
</dbReference>
<dbReference type="FunFam" id="2.10.25.10:FF:000143">
    <property type="entry name" value="Protein crumbs 1"/>
    <property type="match status" value="1"/>
</dbReference>
<dbReference type="FunFam" id="2.10.25.10:FF:000146">
    <property type="entry name" value="Putative neurogenic locus notch"/>
    <property type="match status" value="1"/>
</dbReference>
<dbReference type="FunFam" id="2.10.25.10:FF:000309">
    <property type="entry name" value="Uncharacterized protein, isoform A"/>
    <property type="match status" value="1"/>
</dbReference>
<dbReference type="FunFam" id="2.10.25.10:FF:000472">
    <property type="entry name" value="Uncharacterized protein, isoform A"/>
    <property type="match status" value="1"/>
</dbReference>
<dbReference type="Gene3D" id="3.30.300.320">
    <property type="match status" value="1"/>
</dbReference>
<dbReference type="Gene3D" id="3.30.70.3310">
    <property type="match status" value="1"/>
</dbReference>
<dbReference type="Gene3D" id="1.25.40.20">
    <property type="entry name" value="Ankyrin repeat-containing domain"/>
    <property type="match status" value="1"/>
</dbReference>
<dbReference type="Gene3D" id="2.10.25.10">
    <property type="entry name" value="Laminin"/>
    <property type="match status" value="35"/>
</dbReference>
<dbReference type="IDEAL" id="IID00199"/>
<dbReference type="InterPro" id="IPR002110">
    <property type="entry name" value="Ankyrin_rpt"/>
</dbReference>
<dbReference type="InterPro" id="IPR036770">
    <property type="entry name" value="Ankyrin_rpt-contain_sf"/>
</dbReference>
<dbReference type="InterPro" id="IPR001881">
    <property type="entry name" value="EGF-like_Ca-bd_dom"/>
</dbReference>
<dbReference type="InterPro" id="IPR013032">
    <property type="entry name" value="EGF-like_CS"/>
</dbReference>
<dbReference type="InterPro" id="IPR000742">
    <property type="entry name" value="EGF-like_dom"/>
</dbReference>
<dbReference type="InterPro" id="IPR000152">
    <property type="entry name" value="EGF-type_Asp/Asn_hydroxyl_site"/>
</dbReference>
<dbReference type="InterPro" id="IPR018097">
    <property type="entry name" value="EGF_Ca-bd_CS"/>
</dbReference>
<dbReference type="InterPro" id="IPR009030">
    <property type="entry name" value="Growth_fac_rcpt_cys_sf"/>
</dbReference>
<dbReference type="InterPro" id="IPR008297">
    <property type="entry name" value="Notch"/>
</dbReference>
<dbReference type="InterPro" id="IPR035993">
    <property type="entry name" value="Notch-like_dom_sf"/>
</dbReference>
<dbReference type="InterPro" id="IPR051355">
    <property type="entry name" value="Notch/Slit_guidance"/>
</dbReference>
<dbReference type="InterPro" id="IPR049883">
    <property type="entry name" value="NOTCH1_EGF-like"/>
</dbReference>
<dbReference type="InterPro" id="IPR022362">
    <property type="entry name" value="Notch_1"/>
</dbReference>
<dbReference type="InterPro" id="IPR024600">
    <property type="entry name" value="Notch_C"/>
</dbReference>
<dbReference type="InterPro" id="IPR000800">
    <property type="entry name" value="Notch_dom"/>
</dbReference>
<dbReference type="InterPro" id="IPR010660">
    <property type="entry name" value="Notch_NOD_dom"/>
</dbReference>
<dbReference type="InterPro" id="IPR011656">
    <property type="entry name" value="Notch_NODP_dom"/>
</dbReference>
<dbReference type="PANTHER" id="PTHR45836:SF12">
    <property type="entry name" value="NEUROGENIC LOCUS NOTCH HOMOLOG PROTEIN 1"/>
    <property type="match status" value="1"/>
</dbReference>
<dbReference type="PANTHER" id="PTHR45836">
    <property type="entry name" value="SLIT HOMOLOG"/>
    <property type="match status" value="1"/>
</dbReference>
<dbReference type="Pfam" id="PF00023">
    <property type="entry name" value="Ank"/>
    <property type="match status" value="1"/>
</dbReference>
<dbReference type="Pfam" id="PF12796">
    <property type="entry name" value="Ank_2"/>
    <property type="match status" value="2"/>
</dbReference>
<dbReference type="Pfam" id="PF00008">
    <property type="entry name" value="EGF"/>
    <property type="match status" value="21"/>
</dbReference>
<dbReference type="Pfam" id="PF07645">
    <property type="entry name" value="EGF_CA"/>
    <property type="match status" value="4"/>
</dbReference>
<dbReference type="Pfam" id="PF12661">
    <property type="entry name" value="hEGF"/>
    <property type="match status" value="6"/>
</dbReference>
<dbReference type="Pfam" id="PF06816">
    <property type="entry name" value="NOD"/>
    <property type="match status" value="1"/>
</dbReference>
<dbReference type="Pfam" id="PF07684">
    <property type="entry name" value="NODP"/>
    <property type="match status" value="1"/>
</dbReference>
<dbReference type="Pfam" id="PF00066">
    <property type="entry name" value="Notch"/>
    <property type="match status" value="3"/>
</dbReference>
<dbReference type="PIRSF" id="PIRSF002279">
    <property type="entry name" value="Notch"/>
    <property type="match status" value="1"/>
</dbReference>
<dbReference type="PRINTS" id="PR01452">
    <property type="entry name" value="LNOTCHREPEAT"/>
</dbReference>
<dbReference type="PRINTS" id="PR01983">
    <property type="entry name" value="NOTCH"/>
</dbReference>
<dbReference type="PRINTS" id="PR01984">
    <property type="entry name" value="NOTCH1"/>
</dbReference>
<dbReference type="SMART" id="SM00248">
    <property type="entry name" value="ANK"/>
    <property type="match status" value="6"/>
</dbReference>
<dbReference type="SMART" id="SM01334">
    <property type="entry name" value="DUF3454"/>
    <property type="match status" value="1"/>
</dbReference>
<dbReference type="SMART" id="SM00181">
    <property type="entry name" value="EGF"/>
    <property type="match status" value="36"/>
</dbReference>
<dbReference type="SMART" id="SM00179">
    <property type="entry name" value="EGF_CA"/>
    <property type="match status" value="33"/>
</dbReference>
<dbReference type="SMART" id="SM00004">
    <property type="entry name" value="NL"/>
    <property type="match status" value="3"/>
</dbReference>
<dbReference type="SMART" id="SM01338">
    <property type="entry name" value="NOD"/>
    <property type="match status" value="1"/>
</dbReference>
<dbReference type="SMART" id="SM01339">
    <property type="entry name" value="NODP"/>
    <property type="match status" value="1"/>
</dbReference>
<dbReference type="SUPFAM" id="SSF48403">
    <property type="entry name" value="Ankyrin repeat"/>
    <property type="match status" value="1"/>
</dbReference>
<dbReference type="SUPFAM" id="SSF57196">
    <property type="entry name" value="EGF/Laminin"/>
    <property type="match status" value="15"/>
</dbReference>
<dbReference type="SUPFAM" id="SSF57184">
    <property type="entry name" value="Growth factor receptor domain"/>
    <property type="match status" value="6"/>
</dbReference>
<dbReference type="SUPFAM" id="SSF90193">
    <property type="entry name" value="Notch domain"/>
    <property type="match status" value="3"/>
</dbReference>
<dbReference type="PROSITE" id="PS50297">
    <property type="entry name" value="ANK_REP_REGION"/>
    <property type="match status" value="1"/>
</dbReference>
<dbReference type="PROSITE" id="PS50088">
    <property type="entry name" value="ANK_REPEAT"/>
    <property type="match status" value="4"/>
</dbReference>
<dbReference type="PROSITE" id="PS00010">
    <property type="entry name" value="ASX_HYDROXYL"/>
    <property type="match status" value="22"/>
</dbReference>
<dbReference type="PROSITE" id="PS00022">
    <property type="entry name" value="EGF_1"/>
    <property type="match status" value="35"/>
</dbReference>
<dbReference type="PROSITE" id="PS01186">
    <property type="entry name" value="EGF_2"/>
    <property type="match status" value="27"/>
</dbReference>
<dbReference type="PROSITE" id="PS50026">
    <property type="entry name" value="EGF_3"/>
    <property type="match status" value="36"/>
</dbReference>
<dbReference type="PROSITE" id="PS01187">
    <property type="entry name" value="EGF_CA"/>
    <property type="match status" value="20"/>
</dbReference>
<dbReference type="PROSITE" id="PS50258">
    <property type="entry name" value="LNR"/>
    <property type="match status" value="3"/>
</dbReference>